<dbReference type="EC" id="2.7.11.1" evidence="14 15 16"/>
<dbReference type="EC" id="3.6.5.-" evidence="1"/>
<dbReference type="EMBL" id="AY792512">
    <property type="protein sequence ID" value="AAV63976.1"/>
    <property type="molecule type" value="mRNA"/>
</dbReference>
<dbReference type="EMBL" id="AC099704">
    <property type="status" value="NOT_ANNOTATED_CDS"/>
    <property type="molecule type" value="Genomic_DNA"/>
</dbReference>
<dbReference type="EMBL" id="AC158752">
    <property type="status" value="NOT_ANNOTATED_CDS"/>
    <property type="molecule type" value="Genomic_DNA"/>
</dbReference>
<dbReference type="EMBL" id="AK052591">
    <property type="protein sequence ID" value="BAC35052.1"/>
    <property type="molecule type" value="mRNA"/>
</dbReference>
<dbReference type="EMBL" id="AK034413">
    <property type="protein sequence ID" value="BAC28700.1"/>
    <property type="molecule type" value="mRNA"/>
</dbReference>
<dbReference type="EMBL" id="BC034074">
    <property type="protein sequence ID" value="AAH34074.1"/>
    <property type="molecule type" value="mRNA"/>
</dbReference>
<dbReference type="EMBL" id="BC035949">
    <property type="protein sequence ID" value="AAH35949.1"/>
    <property type="molecule type" value="mRNA"/>
</dbReference>
<dbReference type="CCDS" id="CCDS37180.1"/>
<dbReference type="RefSeq" id="NP_080006.3">
    <property type="nucleotide sequence ID" value="NM_025730.3"/>
</dbReference>
<dbReference type="SMR" id="Q5S006"/>
<dbReference type="BioGRID" id="211674">
    <property type="interactions" value="43"/>
</dbReference>
<dbReference type="DIP" id="DIP-58648N"/>
<dbReference type="FunCoup" id="Q5S006">
    <property type="interactions" value="791"/>
</dbReference>
<dbReference type="IntAct" id="Q5S006">
    <property type="interactions" value="76"/>
</dbReference>
<dbReference type="STRING" id="10090.ENSMUSP00000052584"/>
<dbReference type="BindingDB" id="Q5S006"/>
<dbReference type="ChEMBL" id="CHEMBL2010622"/>
<dbReference type="GlyGen" id="Q5S006">
    <property type="glycosylation" value="2 sites"/>
</dbReference>
<dbReference type="iPTMnet" id="Q5S006"/>
<dbReference type="PhosphoSitePlus" id="Q5S006"/>
<dbReference type="jPOST" id="Q5S006"/>
<dbReference type="PaxDb" id="10090-ENSMUSP00000052584"/>
<dbReference type="PeptideAtlas" id="Q5S006"/>
<dbReference type="ProteomicsDB" id="292371"/>
<dbReference type="Pumba" id="Q5S006"/>
<dbReference type="ABCD" id="Q5S006">
    <property type="antibodies" value="1 sequenced antibody"/>
</dbReference>
<dbReference type="Antibodypedia" id="2109">
    <property type="antibodies" value="875 antibodies from 46 providers"/>
</dbReference>
<dbReference type="DNASU" id="66725"/>
<dbReference type="Ensembl" id="ENSMUST00000060642.7">
    <property type="protein sequence ID" value="ENSMUSP00000052584.7"/>
    <property type="gene ID" value="ENSMUSG00000036273.16"/>
</dbReference>
<dbReference type="GeneID" id="66725"/>
<dbReference type="KEGG" id="mmu:66725"/>
<dbReference type="UCSC" id="uc007xhz.1">
    <property type="organism name" value="mouse"/>
</dbReference>
<dbReference type="AGR" id="MGI:1913975"/>
<dbReference type="CTD" id="120892"/>
<dbReference type="MGI" id="MGI:1913975">
    <property type="gene designation" value="Lrrk2"/>
</dbReference>
<dbReference type="VEuPathDB" id="HostDB:ENSMUSG00000036273"/>
<dbReference type="eggNOG" id="KOG0192">
    <property type="taxonomic scope" value="Eukaryota"/>
</dbReference>
<dbReference type="eggNOG" id="KOG0619">
    <property type="taxonomic scope" value="Eukaryota"/>
</dbReference>
<dbReference type="GeneTree" id="ENSGT00940000158267"/>
<dbReference type="HOGENOM" id="CLU_000815_0_0_1"/>
<dbReference type="InParanoid" id="Q5S006"/>
<dbReference type="OMA" id="FIVECMV"/>
<dbReference type="OrthoDB" id="8940716at2759"/>
<dbReference type="PhylomeDB" id="Q5S006"/>
<dbReference type="TreeFam" id="TF313679"/>
<dbReference type="Reactome" id="R-MMU-8857538">
    <property type="pathway name" value="PTK6 promotes HIF1A stabilization"/>
</dbReference>
<dbReference type="BioGRID-ORCS" id="66725">
    <property type="hits" value="4 hits in 80 CRISPR screens"/>
</dbReference>
<dbReference type="ChiTaRS" id="Lrrk2">
    <property type="organism name" value="mouse"/>
</dbReference>
<dbReference type="PRO" id="PR:Q5S006"/>
<dbReference type="Proteomes" id="UP000000589">
    <property type="component" value="Chromosome 15"/>
</dbReference>
<dbReference type="RNAct" id="Q5S006">
    <property type="molecule type" value="protein"/>
</dbReference>
<dbReference type="Bgee" id="ENSMUSG00000036273">
    <property type="expression patterns" value="Expressed in granulocyte and 156 other cell types or tissues"/>
</dbReference>
<dbReference type="GO" id="GO:0044753">
    <property type="term" value="C:amphisome"/>
    <property type="evidence" value="ECO:0007669"/>
    <property type="project" value="Ensembl"/>
</dbReference>
<dbReference type="GO" id="GO:0044754">
    <property type="term" value="C:autolysosome"/>
    <property type="evidence" value="ECO:0007669"/>
    <property type="project" value="Ensembl"/>
</dbReference>
<dbReference type="GO" id="GO:0030424">
    <property type="term" value="C:axon"/>
    <property type="evidence" value="ECO:0000250"/>
    <property type="project" value="UniProtKB"/>
</dbReference>
<dbReference type="GO" id="GO:0099400">
    <property type="term" value="C:caveola neck"/>
    <property type="evidence" value="ECO:0007669"/>
    <property type="project" value="Ensembl"/>
</dbReference>
<dbReference type="GO" id="GO:0036064">
    <property type="term" value="C:ciliary basal body"/>
    <property type="evidence" value="ECO:0007669"/>
    <property type="project" value="Ensembl"/>
</dbReference>
<dbReference type="GO" id="GO:0005737">
    <property type="term" value="C:cytoplasm"/>
    <property type="evidence" value="ECO:0000314"/>
    <property type="project" value="MGI"/>
</dbReference>
<dbReference type="GO" id="GO:0032473">
    <property type="term" value="C:cytoplasmic side of mitochondrial outer membrane"/>
    <property type="evidence" value="ECO:0007669"/>
    <property type="project" value="Ensembl"/>
</dbReference>
<dbReference type="GO" id="GO:0031410">
    <property type="term" value="C:cytoplasmic vesicle"/>
    <property type="evidence" value="ECO:0000314"/>
    <property type="project" value="UniProtKB"/>
</dbReference>
<dbReference type="GO" id="GO:0005829">
    <property type="term" value="C:cytosol"/>
    <property type="evidence" value="ECO:0000266"/>
    <property type="project" value="MGI"/>
</dbReference>
<dbReference type="GO" id="GO:0030425">
    <property type="term" value="C:dendrite"/>
    <property type="evidence" value="ECO:0000314"/>
    <property type="project" value="ParkinsonsUK-UCL"/>
</dbReference>
<dbReference type="GO" id="GO:0032839">
    <property type="term" value="C:dendrite cytoplasm"/>
    <property type="evidence" value="ECO:0007669"/>
    <property type="project" value="Ensembl"/>
</dbReference>
<dbReference type="GO" id="GO:0005783">
    <property type="term" value="C:endoplasmic reticulum"/>
    <property type="evidence" value="ECO:0000314"/>
    <property type="project" value="UniProtKB"/>
</dbReference>
<dbReference type="GO" id="GO:0070971">
    <property type="term" value="C:endoplasmic reticulum exit site"/>
    <property type="evidence" value="ECO:0000314"/>
    <property type="project" value="UniProtKB"/>
</dbReference>
<dbReference type="GO" id="GO:0005789">
    <property type="term" value="C:endoplasmic reticulum membrane"/>
    <property type="evidence" value="ECO:0007669"/>
    <property type="project" value="UniProtKB-SubCell"/>
</dbReference>
<dbReference type="GO" id="GO:0005768">
    <property type="term" value="C:endosome"/>
    <property type="evidence" value="ECO:0000314"/>
    <property type="project" value="UniProtKB"/>
</dbReference>
<dbReference type="GO" id="GO:0098978">
    <property type="term" value="C:glutamatergic synapse"/>
    <property type="evidence" value="ECO:0000314"/>
    <property type="project" value="SynGO"/>
</dbReference>
<dbReference type="GO" id="GO:0005794">
    <property type="term" value="C:Golgi apparatus"/>
    <property type="evidence" value="ECO:0000314"/>
    <property type="project" value="UniProtKB"/>
</dbReference>
<dbReference type="GO" id="GO:0000139">
    <property type="term" value="C:Golgi membrane"/>
    <property type="evidence" value="ECO:0007669"/>
    <property type="project" value="UniProtKB-SubCell"/>
</dbReference>
<dbReference type="GO" id="GO:0005798">
    <property type="term" value="C:Golgi-associated vesicle"/>
    <property type="evidence" value="ECO:0007669"/>
    <property type="project" value="Ensembl"/>
</dbReference>
<dbReference type="GO" id="GO:0030426">
    <property type="term" value="C:growth cone"/>
    <property type="evidence" value="ECO:0007669"/>
    <property type="project" value="Ensembl"/>
</dbReference>
<dbReference type="GO" id="GO:0005764">
    <property type="term" value="C:lysosome"/>
    <property type="evidence" value="ECO:0000314"/>
    <property type="project" value="UniProtKB"/>
</dbReference>
<dbReference type="GO" id="GO:0045121">
    <property type="term" value="C:membrane raft"/>
    <property type="evidence" value="ECO:0000314"/>
    <property type="project" value="MGI"/>
</dbReference>
<dbReference type="GO" id="GO:0005902">
    <property type="term" value="C:microvillus"/>
    <property type="evidence" value="ECO:0007669"/>
    <property type="project" value="Ensembl"/>
</dbReference>
<dbReference type="GO" id="GO:0005743">
    <property type="term" value="C:mitochondrial inner membrane"/>
    <property type="evidence" value="ECO:0000314"/>
    <property type="project" value="UniProtKB"/>
</dbReference>
<dbReference type="GO" id="GO:0005759">
    <property type="term" value="C:mitochondrial matrix"/>
    <property type="evidence" value="ECO:0000314"/>
    <property type="project" value="UniProtKB"/>
</dbReference>
<dbReference type="GO" id="GO:0005741">
    <property type="term" value="C:mitochondrial outer membrane"/>
    <property type="evidence" value="ECO:0000314"/>
    <property type="project" value="UniProtKB"/>
</dbReference>
<dbReference type="GO" id="GO:0097487">
    <property type="term" value="C:multivesicular body, internal vesicle"/>
    <property type="evidence" value="ECO:0007669"/>
    <property type="project" value="Ensembl"/>
</dbReference>
<dbReference type="GO" id="GO:0031965">
    <property type="term" value="C:nuclear membrane"/>
    <property type="evidence" value="ECO:0007669"/>
    <property type="project" value="Ensembl"/>
</dbReference>
<dbReference type="GO" id="GO:0005654">
    <property type="term" value="C:nucleoplasm"/>
    <property type="evidence" value="ECO:0007669"/>
    <property type="project" value="Ensembl"/>
</dbReference>
<dbReference type="GO" id="GO:0043204">
    <property type="term" value="C:perikaryon"/>
    <property type="evidence" value="ECO:0000250"/>
    <property type="project" value="UniProtKB"/>
</dbReference>
<dbReference type="GO" id="GO:0045335">
    <property type="term" value="C:phagocytic vesicle"/>
    <property type="evidence" value="ECO:0007669"/>
    <property type="project" value="UniProtKB-SubCell"/>
</dbReference>
<dbReference type="GO" id="GO:0005886">
    <property type="term" value="C:plasma membrane"/>
    <property type="evidence" value="ECO:0000314"/>
    <property type="project" value="MGI"/>
</dbReference>
<dbReference type="GO" id="GO:0098794">
    <property type="term" value="C:postsynapse"/>
    <property type="evidence" value="ECO:0007669"/>
    <property type="project" value="GOC"/>
</dbReference>
<dbReference type="GO" id="GO:0099523">
    <property type="term" value="C:presynaptic cytosol"/>
    <property type="evidence" value="ECO:0000314"/>
    <property type="project" value="SynGO"/>
</dbReference>
<dbReference type="GO" id="GO:1990904">
    <property type="term" value="C:ribonucleoprotein complex"/>
    <property type="evidence" value="ECO:0000314"/>
    <property type="project" value="MGI"/>
</dbReference>
<dbReference type="GO" id="GO:0045202">
    <property type="term" value="C:synapse"/>
    <property type="evidence" value="ECO:0000314"/>
    <property type="project" value="MGI"/>
</dbReference>
<dbReference type="GO" id="GO:0008021">
    <property type="term" value="C:synaptic vesicle"/>
    <property type="evidence" value="ECO:0000314"/>
    <property type="project" value="MGI"/>
</dbReference>
<dbReference type="GO" id="GO:0030672">
    <property type="term" value="C:synaptic vesicle membrane"/>
    <property type="evidence" value="ECO:0007669"/>
    <property type="project" value="UniProtKB-SubCell"/>
</dbReference>
<dbReference type="GO" id="GO:0043195">
    <property type="term" value="C:terminal bouton"/>
    <property type="evidence" value="ECO:0000305"/>
    <property type="project" value="ParkinsonsUK-UCL"/>
</dbReference>
<dbReference type="GO" id="GO:0005802">
    <property type="term" value="C:trans-Golgi network"/>
    <property type="evidence" value="ECO:0000314"/>
    <property type="project" value="MGI"/>
</dbReference>
<dbReference type="GO" id="GO:1990909">
    <property type="term" value="C:Wnt signalosome"/>
    <property type="evidence" value="ECO:0000314"/>
    <property type="project" value="ParkinsonsUK-UCL"/>
</dbReference>
<dbReference type="GO" id="GO:0003779">
    <property type="term" value="F:actin binding"/>
    <property type="evidence" value="ECO:0007669"/>
    <property type="project" value="Ensembl"/>
</dbReference>
<dbReference type="GO" id="GO:0005524">
    <property type="term" value="F:ATP binding"/>
    <property type="evidence" value="ECO:0007669"/>
    <property type="project" value="UniProtKB-KW"/>
</dbReference>
<dbReference type="GO" id="GO:1904713">
    <property type="term" value="F:beta-catenin destruction complex binding"/>
    <property type="evidence" value="ECO:0000353"/>
    <property type="project" value="ParkinsonsUK-UCL"/>
</dbReference>
<dbReference type="GO" id="GO:0030276">
    <property type="term" value="F:clathrin binding"/>
    <property type="evidence" value="ECO:0007669"/>
    <property type="project" value="Ensembl"/>
</dbReference>
<dbReference type="GO" id="GO:0005525">
    <property type="term" value="F:GTP binding"/>
    <property type="evidence" value="ECO:0000266"/>
    <property type="project" value="MGI"/>
</dbReference>
<dbReference type="GO" id="GO:0034211">
    <property type="term" value="F:GTP-dependent protein kinase activity"/>
    <property type="evidence" value="ECO:0000266"/>
    <property type="project" value="MGI"/>
</dbReference>
<dbReference type="GO" id="GO:0005096">
    <property type="term" value="F:GTPase activator activity"/>
    <property type="evidence" value="ECO:0007669"/>
    <property type="project" value="UniProtKB-KW"/>
</dbReference>
<dbReference type="GO" id="GO:0003924">
    <property type="term" value="F:GTPase activity"/>
    <property type="evidence" value="ECO:0007669"/>
    <property type="project" value="Ensembl"/>
</dbReference>
<dbReference type="GO" id="GO:0042802">
    <property type="term" value="F:identical protein binding"/>
    <property type="evidence" value="ECO:0000353"/>
    <property type="project" value="IntAct"/>
</dbReference>
<dbReference type="GO" id="GO:0004706">
    <property type="term" value="F:JUN kinase kinase kinase activity"/>
    <property type="evidence" value="ECO:0007669"/>
    <property type="project" value="Ensembl"/>
</dbReference>
<dbReference type="GO" id="GO:0016301">
    <property type="term" value="F:kinase activity"/>
    <property type="evidence" value="ECO:0000250"/>
    <property type="project" value="UniProtKB"/>
</dbReference>
<dbReference type="GO" id="GO:0000287">
    <property type="term" value="F:magnesium ion binding"/>
    <property type="evidence" value="ECO:0007669"/>
    <property type="project" value="Ensembl"/>
</dbReference>
<dbReference type="GO" id="GO:0036479">
    <property type="term" value="F:peroxidase inhibitor activity"/>
    <property type="evidence" value="ECO:0007669"/>
    <property type="project" value="Ensembl"/>
</dbReference>
<dbReference type="GO" id="GO:0042803">
    <property type="term" value="F:protein homodimerization activity"/>
    <property type="evidence" value="ECO:0007669"/>
    <property type="project" value="Ensembl"/>
</dbReference>
<dbReference type="GO" id="GO:0051018">
    <property type="term" value="F:protein kinase A binding"/>
    <property type="evidence" value="ECO:0000353"/>
    <property type="project" value="ParkinsonsUK-UCL"/>
</dbReference>
<dbReference type="GO" id="GO:0004672">
    <property type="term" value="F:protein kinase activity"/>
    <property type="evidence" value="ECO:0000314"/>
    <property type="project" value="MGI"/>
</dbReference>
<dbReference type="GO" id="GO:0106310">
    <property type="term" value="F:protein serine kinase activity"/>
    <property type="evidence" value="ECO:0007669"/>
    <property type="project" value="RHEA"/>
</dbReference>
<dbReference type="GO" id="GO:0004674">
    <property type="term" value="F:protein serine/threonine kinase activity"/>
    <property type="evidence" value="ECO:0000314"/>
    <property type="project" value="MGI"/>
</dbReference>
<dbReference type="GO" id="GO:0044877">
    <property type="term" value="F:protein-containing complex binding"/>
    <property type="evidence" value="ECO:0000305"/>
    <property type="project" value="ParkinsonsUK-UCL"/>
</dbReference>
<dbReference type="GO" id="GO:0030159">
    <property type="term" value="F:signaling receptor complex adaptor activity"/>
    <property type="evidence" value="ECO:0000305"/>
    <property type="project" value="ParkinsonsUK-UCL"/>
</dbReference>
<dbReference type="GO" id="GO:0031267">
    <property type="term" value="F:small GTPase binding"/>
    <property type="evidence" value="ECO:0000353"/>
    <property type="project" value="BHF-UCL"/>
</dbReference>
<dbReference type="GO" id="GO:0017075">
    <property type="term" value="F:syntaxin-1 binding"/>
    <property type="evidence" value="ECO:0007669"/>
    <property type="project" value="Ensembl"/>
</dbReference>
<dbReference type="GO" id="GO:0044325">
    <property type="term" value="F:transmembrane transporter binding"/>
    <property type="evidence" value="ECO:0007669"/>
    <property type="project" value="Ensembl"/>
</dbReference>
<dbReference type="GO" id="GO:0015631">
    <property type="term" value="F:tubulin binding"/>
    <property type="evidence" value="ECO:0007669"/>
    <property type="project" value="Ensembl"/>
</dbReference>
<dbReference type="GO" id="GO:0006914">
    <property type="term" value="P:autophagy"/>
    <property type="evidence" value="ECO:0007669"/>
    <property type="project" value="UniProtKB-KW"/>
</dbReference>
<dbReference type="GO" id="GO:0019722">
    <property type="term" value="P:calcium-mediated signaling"/>
    <property type="evidence" value="ECO:0007669"/>
    <property type="project" value="Ensembl"/>
</dbReference>
<dbReference type="GO" id="GO:1903351">
    <property type="term" value="P:cellular response to dopamine"/>
    <property type="evidence" value="ECO:0007669"/>
    <property type="project" value="Ensembl"/>
</dbReference>
<dbReference type="GO" id="GO:0071287">
    <property type="term" value="P:cellular response to manganese ion"/>
    <property type="evidence" value="ECO:0007669"/>
    <property type="project" value="Ensembl"/>
</dbReference>
<dbReference type="GO" id="GO:0034614">
    <property type="term" value="P:cellular response to reactive oxygen species"/>
    <property type="evidence" value="ECO:0007669"/>
    <property type="project" value="Ensembl"/>
</dbReference>
<dbReference type="GO" id="GO:0009267">
    <property type="term" value="P:cellular response to starvation"/>
    <property type="evidence" value="ECO:0007669"/>
    <property type="project" value="Ensembl"/>
</dbReference>
<dbReference type="GO" id="GO:0008340">
    <property type="term" value="P:determination of adult lifespan"/>
    <property type="evidence" value="ECO:0007669"/>
    <property type="project" value="Ensembl"/>
</dbReference>
<dbReference type="GO" id="GO:0006897">
    <property type="term" value="P:endocytosis"/>
    <property type="evidence" value="ECO:0007669"/>
    <property type="project" value="Ensembl"/>
</dbReference>
<dbReference type="GO" id="GO:0007029">
    <property type="term" value="P:endoplasmic reticulum organization"/>
    <property type="evidence" value="ECO:0000315"/>
    <property type="project" value="UniProtKB"/>
</dbReference>
<dbReference type="GO" id="GO:0060079">
    <property type="term" value="P:excitatory postsynaptic potential"/>
    <property type="evidence" value="ECO:0000315"/>
    <property type="project" value="ParkinsonsUK-UCL"/>
</dbReference>
<dbReference type="GO" id="GO:0007030">
    <property type="term" value="P:Golgi organization"/>
    <property type="evidence" value="ECO:0000316"/>
    <property type="project" value="MGI"/>
</dbReference>
<dbReference type="GO" id="GO:0046039">
    <property type="term" value="P:GTP metabolic process"/>
    <property type="evidence" value="ECO:0007669"/>
    <property type="project" value="Ensembl"/>
</dbReference>
<dbReference type="GO" id="GO:0048312">
    <property type="term" value="P:intracellular distribution of mitochondria"/>
    <property type="evidence" value="ECO:0007669"/>
    <property type="project" value="Ensembl"/>
</dbReference>
<dbReference type="GO" id="GO:0035556">
    <property type="term" value="P:intracellular signal transduction"/>
    <property type="evidence" value="ECO:0000315"/>
    <property type="project" value="ParkinsonsUK-UCL"/>
</dbReference>
<dbReference type="GO" id="GO:0007254">
    <property type="term" value="P:JNK cascade"/>
    <property type="evidence" value="ECO:0007669"/>
    <property type="project" value="Ensembl"/>
</dbReference>
<dbReference type="GO" id="GO:0035641">
    <property type="term" value="P:locomotory exploration behavior"/>
    <property type="evidence" value="ECO:0000315"/>
    <property type="project" value="ParkinsonsUK-UCL"/>
</dbReference>
<dbReference type="GO" id="GO:0007005">
    <property type="term" value="P:mitochondrion organization"/>
    <property type="evidence" value="ECO:0007669"/>
    <property type="project" value="Ensembl"/>
</dbReference>
<dbReference type="GO" id="GO:1902902">
    <property type="term" value="P:negative regulation of autophagosome assembly"/>
    <property type="evidence" value="ECO:0007669"/>
    <property type="project" value="Ensembl"/>
</dbReference>
<dbReference type="GO" id="GO:1902236">
    <property type="term" value="P:negative regulation of endoplasmic reticulum stress-induced intrinsic apoptotic signaling pathway"/>
    <property type="evidence" value="ECO:0007669"/>
    <property type="project" value="Ensembl"/>
</dbReference>
<dbReference type="GO" id="GO:0090394">
    <property type="term" value="P:negative regulation of excitatory postsynaptic potential"/>
    <property type="evidence" value="ECO:0000315"/>
    <property type="project" value="ParkinsonsUK-UCL"/>
</dbReference>
<dbReference type="GO" id="GO:0010977">
    <property type="term" value="P:negative regulation of neuron projection development"/>
    <property type="evidence" value="ECO:0007669"/>
    <property type="project" value="Ensembl"/>
</dbReference>
<dbReference type="GO" id="GO:0045746">
    <property type="term" value="P:negative regulation of Notch signaling pathway"/>
    <property type="evidence" value="ECO:0000314"/>
    <property type="project" value="MGI"/>
</dbReference>
<dbReference type="GO" id="GO:0010955">
    <property type="term" value="P:negative regulation of protein processing"/>
    <property type="evidence" value="ECO:0007669"/>
    <property type="project" value="Ensembl"/>
</dbReference>
<dbReference type="GO" id="GO:1903215">
    <property type="term" value="P:negative regulation of protein targeting to mitochondrion"/>
    <property type="evidence" value="ECO:0007669"/>
    <property type="project" value="Ensembl"/>
</dbReference>
<dbReference type="GO" id="GO:0007528">
    <property type="term" value="P:neuromuscular junction development"/>
    <property type="evidence" value="ECO:0007669"/>
    <property type="project" value="Ensembl"/>
</dbReference>
<dbReference type="GO" id="GO:0030182">
    <property type="term" value="P:neuron differentiation"/>
    <property type="evidence" value="ECO:0000314"/>
    <property type="project" value="MGI"/>
</dbReference>
<dbReference type="GO" id="GO:0140058">
    <property type="term" value="P:neuron projection arborization"/>
    <property type="evidence" value="ECO:0007669"/>
    <property type="project" value="Ensembl"/>
</dbReference>
<dbReference type="GO" id="GO:0048812">
    <property type="term" value="P:neuron projection morphogenesis"/>
    <property type="evidence" value="ECO:0000250"/>
    <property type="project" value="UniProtKB"/>
</dbReference>
<dbReference type="GO" id="GO:0010508">
    <property type="term" value="P:positive regulation of autophagy"/>
    <property type="evidence" value="ECO:0000315"/>
    <property type="project" value="BHF-UCL"/>
</dbReference>
<dbReference type="GO" id="GO:0090263">
    <property type="term" value="P:positive regulation of canonical Wnt signaling pathway"/>
    <property type="evidence" value="ECO:0000250"/>
    <property type="project" value="ParkinsonsUK-UCL"/>
</dbReference>
<dbReference type="GO" id="GO:0060161">
    <property type="term" value="P:positive regulation of dopamine receptor signaling pathway"/>
    <property type="evidence" value="ECO:0007669"/>
    <property type="project" value="Ensembl"/>
</dbReference>
<dbReference type="GO" id="GO:1903980">
    <property type="term" value="P:positive regulation of microglial cell activation"/>
    <property type="evidence" value="ECO:0007669"/>
    <property type="project" value="Ensembl"/>
</dbReference>
<dbReference type="GO" id="GO:0043068">
    <property type="term" value="P:positive regulation of programmed cell death"/>
    <property type="evidence" value="ECO:0007669"/>
    <property type="project" value="Ensembl"/>
</dbReference>
<dbReference type="GO" id="GO:0032436">
    <property type="term" value="P:positive regulation of proteasomal ubiquitin-dependent protein catabolic process"/>
    <property type="evidence" value="ECO:0000315"/>
    <property type="project" value="BHF-UCL"/>
</dbReference>
<dbReference type="GO" id="GO:1902499">
    <property type="term" value="P:positive regulation of protein autoubiquitination"/>
    <property type="evidence" value="ECO:0007669"/>
    <property type="project" value="Ensembl"/>
</dbReference>
<dbReference type="GO" id="GO:1900244">
    <property type="term" value="P:positive regulation of synaptic vesicle endocytosis"/>
    <property type="evidence" value="ECO:0007669"/>
    <property type="project" value="Ensembl"/>
</dbReference>
<dbReference type="GO" id="GO:0032760">
    <property type="term" value="P:positive regulation of tumor necrosis factor production"/>
    <property type="evidence" value="ECO:0007669"/>
    <property type="project" value="Ensembl"/>
</dbReference>
<dbReference type="GO" id="GO:0006606">
    <property type="term" value="P:protein import into nucleus"/>
    <property type="evidence" value="ECO:0000314"/>
    <property type="project" value="MGI"/>
</dbReference>
<dbReference type="GO" id="GO:0008104">
    <property type="term" value="P:protein localization"/>
    <property type="evidence" value="ECO:0000315"/>
    <property type="project" value="ParkinsonsUK-UCL"/>
</dbReference>
<dbReference type="GO" id="GO:0070973">
    <property type="term" value="P:protein localization to endoplasmic reticulum exit site"/>
    <property type="evidence" value="ECO:0000315"/>
    <property type="project" value="UniProtKB"/>
</dbReference>
<dbReference type="GO" id="GO:0006468">
    <property type="term" value="P:protein phosphorylation"/>
    <property type="evidence" value="ECO:0000315"/>
    <property type="project" value="UniProtKB"/>
</dbReference>
<dbReference type="GO" id="GO:2000172">
    <property type="term" value="P:regulation of branching morphogenesis of a nerve"/>
    <property type="evidence" value="ECO:0007669"/>
    <property type="project" value="Ensembl"/>
</dbReference>
<dbReference type="GO" id="GO:1905289">
    <property type="term" value="P:regulation of CAMKK-AMPK signaling cascade"/>
    <property type="evidence" value="ECO:0007669"/>
    <property type="project" value="Ensembl"/>
</dbReference>
<dbReference type="GO" id="GO:0141161">
    <property type="term" value="P:regulation of cAMP/PKA signal transduction"/>
    <property type="evidence" value="ECO:0000315"/>
    <property type="project" value="ParkinsonsUK-UCL"/>
</dbReference>
<dbReference type="GO" id="GO:0060828">
    <property type="term" value="P:regulation of canonical Wnt signaling pathway"/>
    <property type="evidence" value="ECO:0000353"/>
    <property type="project" value="ParkinsonsUK-UCL"/>
</dbReference>
<dbReference type="GO" id="GO:0061001">
    <property type="term" value="P:regulation of dendritic spine morphogenesis"/>
    <property type="evidence" value="ECO:0000316"/>
    <property type="project" value="ParkinsonsUK-UCL"/>
</dbReference>
<dbReference type="GO" id="GO:0060159">
    <property type="term" value="P:regulation of dopamine receptor signaling pathway"/>
    <property type="evidence" value="ECO:0000315"/>
    <property type="project" value="ParkinsonsUK-UCL"/>
</dbReference>
<dbReference type="GO" id="GO:0060628">
    <property type="term" value="P:regulation of ER to Golgi vesicle-mediated transport"/>
    <property type="evidence" value="ECO:0000315"/>
    <property type="project" value="UniProtKB"/>
</dbReference>
<dbReference type="GO" id="GO:0010468">
    <property type="term" value="P:regulation of gene expression"/>
    <property type="evidence" value="ECO:0000315"/>
    <property type="project" value="MGI"/>
</dbReference>
<dbReference type="GO" id="GO:0035564">
    <property type="term" value="P:regulation of kidney size"/>
    <property type="evidence" value="ECO:0000315"/>
    <property type="project" value="BHF-UCL"/>
</dbReference>
<dbReference type="GO" id="GO:0040012">
    <property type="term" value="P:regulation of locomotion"/>
    <property type="evidence" value="ECO:0007669"/>
    <property type="project" value="Ensembl"/>
</dbReference>
<dbReference type="GO" id="GO:0035751">
    <property type="term" value="P:regulation of lysosomal lumen pH"/>
    <property type="evidence" value="ECO:0007669"/>
    <property type="project" value="Ensembl"/>
</dbReference>
<dbReference type="GO" id="GO:0051900">
    <property type="term" value="P:regulation of mitochondrial depolarization"/>
    <property type="evidence" value="ECO:0007669"/>
    <property type="project" value="Ensembl"/>
</dbReference>
<dbReference type="GO" id="GO:1902692">
    <property type="term" value="P:regulation of neuroblast proliferation"/>
    <property type="evidence" value="ECO:0007669"/>
    <property type="project" value="Ensembl"/>
</dbReference>
<dbReference type="GO" id="GO:0014041">
    <property type="term" value="P:regulation of neuron maturation"/>
    <property type="evidence" value="ECO:0007669"/>
    <property type="project" value="Ensembl"/>
</dbReference>
<dbReference type="GO" id="GO:0031647">
    <property type="term" value="P:regulation of protein stability"/>
    <property type="evidence" value="ECO:0007669"/>
    <property type="project" value="Ensembl"/>
</dbReference>
<dbReference type="GO" id="GO:2000377">
    <property type="term" value="P:regulation of reactive oxygen species metabolic process"/>
    <property type="evidence" value="ECO:0007669"/>
    <property type="project" value="Ensembl"/>
</dbReference>
<dbReference type="GO" id="GO:1905279">
    <property type="term" value="P:regulation of retrograde transport, endosome to Golgi"/>
    <property type="evidence" value="ECO:0007669"/>
    <property type="project" value="Ensembl"/>
</dbReference>
<dbReference type="GO" id="GO:0051966">
    <property type="term" value="P:regulation of synaptic transmission, glutamatergic"/>
    <property type="evidence" value="ECO:0000315"/>
    <property type="project" value="ParkinsonsUK-UCL"/>
</dbReference>
<dbReference type="GO" id="GO:1900242">
    <property type="term" value="P:regulation of synaptic vesicle endocytosis"/>
    <property type="evidence" value="ECO:0000314"/>
    <property type="project" value="SynGO"/>
</dbReference>
<dbReference type="GO" id="GO:2000300">
    <property type="term" value="P:regulation of synaptic vesicle exocytosis"/>
    <property type="evidence" value="ECO:0007669"/>
    <property type="project" value="Ensembl"/>
</dbReference>
<dbReference type="GO" id="GO:1902803">
    <property type="term" value="P:regulation of synaptic vesicle transport"/>
    <property type="evidence" value="ECO:0000315"/>
    <property type="project" value="ParkinsonsUK-UCL"/>
</dbReference>
<dbReference type="GO" id="GO:0007266">
    <property type="term" value="P:Rho protein signal transduction"/>
    <property type="evidence" value="ECO:0007669"/>
    <property type="project" value="Ensembl"/>
</dbReference>
<dbReference type="GO" id="GO:0007283">
    <property type="term" value="P:spermatogenesis"/>
    <property type="evidence" value="ECO:0007669"/>
    <property type="project" value="Ensembl"/>
</dbReference>
<dbReference type="GO" id="GO:0021756">
    <property type="term" value="P:striatum development"/>
    <property type="evidence" value="ECO:0007669"/>
    <property type="project" value="Ensembl"/>
</dbReference>
<dbReference type="GO" id="GO:0036465">
    <property type="term" value="P:synaptic vesicle recycling"/>
    <property type="evidence" value="ECO:0000304"/>
    <property type="project" value="ParkinsonsUK-UCL"/>
</dbReference>
<dbReference type="GO" id="GO:0022028">
    <property type="term" value="P:tangential migration from the subventricular zone to the olfactory bulb"/>
    <property type="evidence" value="ECO:0007669"/>
    <property type="project" value="Ensembl"/>
</dbReference>
<dbReference type="GO" id="GO:1904887">
    <property type="term" value="P:Wnt signalosome assembly"/>
    <property type="evidence" value="ECO:0000305"/>
    <property type="project" value="ParkinsonsUK-UCL"/>
</dbReference>
<dbReference type="CDD" id="cd09914">
    <property type="entry name" value="RocCOR"/>
    <property type="match status" value="1"/>
</dbReference>
<dbReference type="CDD" id="cd14068">
    <property type="entry name" value="STKc_LRRK2"/>
    <property type="match status" value="1"/>
</dbReference>
<dbReference type="FunFam" id="1.10.510.10:FF:001216">
    <property type="entry name" value="Leucine-rich repeat kinase 2"/>
    <property type="match status" value="1"/>
</dbReference>
<dbReference type="FunFam" id="1.25.40.20:FF:000219">
    <property type="entry name" value="Leucine-rich repeat serine/threonine-protein kinase 2"/>
    <property type="match status" value="1"/>
</dbReference>
<dbReference type="FunFam" id="2.130.10.10:FF:000481">
    <property type="entry name" value="Leucine-rich repeat serine/threonine-protein kinase 2"/>
    <property type="match status" value="1"/>
</dbReference>
<dbReference type="FunFam" id="3.30.200.20:FF:000313">
    <property type="entry name" value="Leucine-rich repeat serine/threonine-protein kinase 2"/>
    <property type="match status" value="1"/>
</dbReference>
<dbReference type="FunFam" id="3.30.70.1390:FF:000001">
    <property type="entry name" value="Leucine-rich repeat serine/threonine-protein kinase 2"/>
    <property type="match status" value="1"/>
</dbReference>
<dbReference type="FunFam" id="3.40.50.300:FF:000656">
    <property type="entry name" value="Leucine-rich repeat serine/threonine-protein kinase 2"/>
    <property type="match status" value="1"/>
</dbReference>
<dbReference type="FunFam" id="3.80.10.10:FF:000110">
    <property type="entry name" value="Leucine-rich repeat serine/threonine-protein kinase 2"/>
    <property type="match status" value="1"/>
</dbReference>
<dbReference type="FunFam" id="1.25.10.10:FF:000215">
    <property type="entry name" value="leucine-rich repeat serine/threonine-protein kinase 2"/>
    <property type="match status" value="1"/>
</dbReference>
<dbReference type="FunFam" id="3.80.10.10:FF:000179">
    <property type="entry name" value="leucine-rich repeat serine/threonine-protein kinase 2"/>
    <property type="match status" value="1"/>
</dbReference>
<dbReference type="FunFam" id="1.25.10.10:FF:000232">
    <property type="entry name" value="leucine-rich repeat serine/threonine-protein kinase 2 isoform X1"/>
    <property type="match status" value="1"/>
</dbReference>
<dbReference type="Gene3D" id="1.25.40.20">
    <property type="entry name" value="Ankyrin repeat-containing domain"/>
    <property type="match status" value="1"/>
</dbReference>
<dbReference type="Gene3D" id="1.25.10.10">
    <property type="entry name" value="Leucine-rich Repeat Variant"/>
    <property type="match status" value="2"/>
</dbReference>
<dbReference type="Gene3D" id="3.40.50.300">
    <property type="entry name" value="P-loop containing nucleotide triphosphate hydrolases"/>
    <property type="match status" value="1"/>
</dbReference>
<dbReference type="Gene3D" id="3.30.200.20">
    <property type="entry name" value="Phosphorylase Kinase, domain 1"/>
    <property type="match status" value="1"/>
</dbReference>
<dbReference type="Gene3D" id="3.80.10.10">
    <property type="entry name" value="Ribonuclease Inhibitor"/>
    <property type="match status" value="2"/>
</dbReference>
<dbReference type="Gene3D" id="3.30.70.1390">
    <property type="entry name" value="ROC domain from the Parkinson's disease-associated leucine-rich repeat kinase 2"/>
    <property type="match status" value="1"/>
</dbReference>
<dbReference type="Gene3D" id="1.10.510.10">
    <property type="entry name" value="Transferase(Phosphotransferase) domain 1"/>
    <property type="match status" value="1"/>
</dbReference>
<dbReference type="Gene3D" id="2.130.10.10">
    <property type="entry name" value="YVTN repeat-like/Quinoprotein amine dehydrogenase"/>
    <property type="match status" value="1"/>
</dbReference>
<dbReference type="InterPro" id="IPR056593">
    <property type="entry name" value="ANK_LRRK2"/>
</dbReference>
<dbReference type="InterPro" id="IPR036770">
    <property type="entry name" value="Ankyrin_rpt-contain_sf"/>
</dbReference>
<dbReference type="InterPro" id="IPR011989">
    <property type="entry name" value="ARM-like"/>
</dbReference>
<dbReference type="InterPro" id="IPR016024">
    <property type="entry name" value="ARM-type_fold"/>
</dbReference>
<dbReference type="InterPro" id="IPR056597">
    <property type="entry name" value="ARM_LRRK2"/>
</dbReference>
<dbReference type="InterPro" id="IPR056602">
    <property type="entry name" value="Beta-prop_LRRK2"/>
</dbReference>
<dbReference type="InterPro" id="IPR032171">
    <property type="entry name" value="COR-A"/>
</dbReference>
<dbReference type="InterPro" id="IPR011009">
    <property type="entry name" value="Kinase-like_dom_sf"/>
</dbReference>
<dbReference type="InterPro" id="IPR001611">
    <property type="entry name" value="Leu-rich_rpt"/>
</dbReference>
<dbReference type="InterPro" id="IPR003591">
    <property type="entry name" value="Leu-rich_rpt_typical-subtyp"/>
</dbReference>
<dbReference type="InterPro" id="IPR032675">
    <property type="entry name" value="LRR_dom_sf"/>
</dbReference>
<dbReference type="InterPro" id="IPR027417">
    <property type="entry name" value="P-loop_NTPase"/>
</dbReference>
<dbReference type="InterPro" id="IPR000719">
    <property type="entry name" value="Prot_kinase_dom"/>
</dbReference>
<dbReference type="InterPro" id="IPR017441">
    <property type="entry name" value="Protein_kinase_ATP_BS"/>
</dbReference>
<dbReference type="InterPro" id="IPR020859">
    <property type="entry name" value="ROC"/>
</dbReference>
<dbReference type="InterPro" id="IPR008271">
    <property type="entry name" value="Ser/Thr_kinase_AS"/>
</dbReference>
<dbReference type="InterPro" id="IPR051420">
    <property type="entry name" value="Ser_Thr_Kinases_DiverseReg"/>
</dbReference>
<dbReference type="InterPro" id="IPR005225">
    <property type="entry name" value="Small_GTP-bd"/>
</dbReference>
<dbReference type="InterPro" id="IPR015943">
    <property type="entry name" value="WD40/YVTN_repeat-like_dom_sf"/>
</dbReference>
<dbReference type="InterPro" id="IPR036322">
    <property type="entry name" value="WD40_repeat_dom_sf"/>
</dbReference>
<dbReference type="NCBIfam" id="TIGR00231">
    <property type="entry name" value="small_GTP"/>
    <property type="match status" value="1"/>
</dbReference>
<dbReference type="PANTHER" id="PTHR48005">
    <property type="entry name" value="LEUCINE RICH REPEAT KINASE 2"/>
    <property type="match status" value="1"/>
</dbReference>
<dbReference type="PANTHER" id="PTHR48005:SF13">
    <property type="entry name" value="SERINE_THREONINE-PROTEIN KINASE DDB_G0278509-RELATED"/>
    <property type="match status" value="1"/>
</dbReference>
<dbReference type="Pfam" id="PF23745">
    <property type="entry name" value="ANK_LRRK2"/>
    <property type="match status" value="1"/>
</dbReference>
<dbReference type="Pfam" id="PF23744">
    <property type="entry name" value="ARM_LRRK2"/>
    <property type="match status" value="1"/>
</dbReference>
<dbReference type="Pfam" id="PF23748">
    <property type="entry name" value="Beta-prop_LRRK2"/>
    <property type="match status" value="1"/>
</dbReference>
<dbReference type="Pfam" id="PF16095">
    <property type="entry name" value="COR-A"/>
    <property type="match status" value="1"/>
</dbReference>
<dbReference type="Pfam" id="PF25497">
    <property type="entry name" value="COR-B"/>
    <property type="match status" value="1"/>
</dbReference>
<dbReference type="Pfam" id="PF00560">
    <property type="entry name" value="LRR_1"/>
    <property type="match status" value="1"/>
</dbReference>
<dbReference type="Pfam" id="PF13855">
    <property type="entry name" value="LRR_8"/>
    <property type="match status" value="1"/>
</dbReference>
<dbReference type="Pfam" id="PF00069">
    <property type="entry name" value="Pkinase"/>
    <property type="match status" value="1"/>
</dbReference>
<dbReference type="Pfam" id="PF08477">
    <property type="entry name" value="Roc"/>
    <property type="match status" value="1"/>
</dbReference>
<dbReference type="PRINTS" id="PR00449">
    <property type="entry name" value="RASTRNSFRMNG"/>
</dbReference>
<dbReference type="SMART" id="SM00364">
    <property type="entry name" value="LRR_BAC"/>
    <property type="match status" value="6"/>
</dbReference>
<dbReference type="SMART" id="SM00369">
    <property type="entry name" value="LRR_TYP"/>
    <property type="match status" value="7"/>
</dbReference>
<dbReference type="SMART" id="SM00175">
    <property type="entry name" value="RAB"/>
    <property type="match status" value="1"/>
</dbReference>
<dbReference type="SMART" id="SM00220">
    <property type="entry name" value="S_TKc"/>
    <property type="match status" value="1"/>
</dbReference>
<dbReference type="SUPFAM" id="SSF48403">
    <property type="entry name" value="Ankyrin repeat"/>
    <property type="match status" value="1"/>
</dbReference>
<dbReference type="SUPFAM" id="SSF48371">
    <property type="entry name" value="ARM repeat"/>
    <property type="match status" value="2"/>
</dbReference>
<dbReference type="SUPFAM" id="SSF52058">
    <property type="entry name" value="L domain-like"/>
    <property type="match status" value="1"/>
</dbReference>
<dbReference type="SUPFAM" id="SSF52540">
    <property type="entry name" value="P-loop containing nucleoside triphosphate hydrolases"/>
    <property type="match status" value="1"/>
</dbReference>
<dbReference type="SUPFAM" id="SSF56112">
    <property type="entry name" value="Protein kinase-like (PK-like)"/>
    <property type="match status" value="1"/>
</dbReference>
<dbReference type="SUPFAM" id="SSF50978">
    <property type="entry name" value="WD40 repeat-like"/>
    <property type="match status" value="1"/>
</dbReference>
<dbReference type="PROSITE" id="PS51450">
    <property type="entry name" value="LRR"/>
    <property type="match status" value="11"/>
</dbReference>
<dbReference type="PROSITE" id="PS00107">
    <property type="entry name" value="PROTEIN_KINASE_ATP"/>
    <property type="match status" value="1"/>
</dbReference>
<dbReference type="PROSITE" id="PS50011">
    <property type="entry name" value="PROTEIN_KINASE_DOM"/>
    <property type="match status" value="1"/>
</dbReference>
<dbReference type="PROSITE" id="PS00108">
    <property type="entry name" value="PROTEIN_KINASE_ST"/>
    <property type="match status" value="1"/>
</dbReference>
<dbReference type="PROSITE" id="PS51424">
    <property type="entry name" value="ROC"/>
    <property type="match status" value="1"/>
</dbReference>
<gene>
    <name type="primary">Lrrk2</name>
</gene>
<organism>
    <name type="scientific">Mus musculus</name>
    <name type="common">Mouse</name>
    <dbReference type="NCBI Taxonomy" id="10090"/>
    <lineage>
        <taxon>Eukaryota</taxon>
        <taxon>Metazoa</taxon>
        <taxon>Chordata</taxon>
        <taxon>Craniata</taxon>
        <taxon>Vertebrata</taxon>
        <taxon>Euteleostomi</taxon>
        <taxon>Mammalia</taxon>
        <taxon>Eutheria</taxon>
        <taxon>Euarchontoglires</taxon>
        <taxon>Glires</taxon>
        <taxon>Rodentia</taxon>
        <taxon>Myomorpha</taxon>
        <taxon>Muroidea</taxon>
        <taxon>Muridae</taxon>
        <taxon>Murinae</taxon>
        <taxon>Mus</taxon>
        <taxon>Mus</taxon>
    </lineage>
</organism>
<keyword id="KW-0067">ATP-binding</keyword>
<keyword id="KW-0072">Autophagy</keyword>
<keyword id="KW-0966">Cell projection</keyword>
<keyword id="KW-0175">Coiled coil</keyword>
<keyword id="KW-0963">Cytoplasm</keyword>
<keyword id="KW-0968">Cytoplasmic vesicle</keyword>
<keyword id="KW-0206">Cytoskeleton</keyword>
<keyword id="KW-0221">Differentiation</keyword>
<keyword id="KW-0256">Endoplasmic reticulum</keyword>
<keyword id="KW-0967">Endosome</keyword>
<keyword id="KW-0333">Golgi apparatus</keyword>
<keyword id="KW-0342">GTP-binding</keyword>
<keyword id="KW-0343">GTPase activation</keyword>
<keyword id="KW-0378">Hydrolase</keyword>
<keyword id="KW-0418">Kinase</keyword>
<keyword id="KW-0433">Leucine-rich repeat</keyword>
<keyword id="KW-0458">Lysosome</keyword>
<keyword id="KW-0472">Membrane</keyword>
<keyword id="KW-0496">Mitochondrion</keyword>
<keyword id="KW-1000">Mitochondrion outer membrane</keyword>
<keyword id="KW-0547">Nucleotide-binding</keyword>
<keyword id="KW-0597">Phosphoprotein</keyword>
<keyword id="KW-1185">Reference proteome</keyword>
<keyword id="KW-0677">Repeat</keyword>
<keyword id="KW-0723">Serine/threonine-protein kinase</keyword>
<keyword id="KW-0770">Synapse</keyword>
<keyword id="KW-0808">Transferase</keyword>
<keyword id="KW-0832">Ubl conjugation</keyword>
<keyword id="KW-0853">WD repeat</keyword>
<name>LRRK2_MOUSE</name>
<evidence type="ECO:0000250" key="1">
    <source>
        <dbReference type="UniProtKB" id="Q5S007"/>
    </source>
</evidence>
<evidence type="ECO:0000255" key="2"/>
<evidence type="ECO:0000255" key="3">
    <source>
        <dbReference type="PROSITE-ProRule" id="PRU00159"/>
    </source>
</evidence>
<evidence type="ECO:0000255" key="4">
    <source>
        <dbReference type="PROSITE-ProRule" id="PRU00758"/>
    </source>
</evidence>
<evidence type="ECO:0000255" key="5">
    <source>
        <dbReference type="PROSITE-ProRule" id="PRU10027"/>
    </source>
</evidence>
<evidence type="ECO:0000256" key="6">
    <source>
        <dbReference type="SAM" id="MobiDB-lite"/>
    </source>
</evidence>
<evidence type="ECO:0000269" key="7">
    <source>
    </source>
</evidence>
<evidence type="ECO:0000269" key="8">
    <source>
    </source>
</evidence>
<evidence type="ECO:0000269" key="9">
    <source>
    </source>
</evidence>
<evidence type="ECO:0000269" key="10">
    <source>
    </source>
</evidence>
<evidence type="ECO:0000269" key="11">
    <source>
    </source>
</evidence>
<evidence type="ECO:0000269" key="12">
    <source>
    </source>
</evidence>
<evidence type="ECO:0000269" key="13">
    <source>
    </source>
</evidence>
<evidence type="ECO:0000269" key="14">
    <source>
    </source>
</evidence>
<evidence type="ECO:0000269" key="15">
    <source>
    </source>
</evidence>
<evidence type="ECO:0000269" key="16">
    <source>
    </source>
</evidence>
<evidence type="ECO:0000269" key="17">
    <source>
    </source>
</evidence>
<evidence type="ECO:0000269" key="18">
    <source>
    </source>
</evidence>
<evidence type="ECO:0000269" key="19">
    <source>
    </source>
</evidence>
<evidence type="ECO:0000269" key="20">
    <source>
    </source>
</evidence>
<evidence type="ECO:0000305" key="21"/>
<evidence type="ECO:0000305" key="22">
    <source>
    </source>
</evidence>
<evidence type="ECO:0007744" key="23">
    <source>
    </source>
</evidence>
<reference key="1">
    <citation type="journal article" date="2004" name="Neuron">
        <title>Mutations in LRRK2 cause autosomal-dominant parkinsonism with pleomorphic pathology.</title>
        <authorList>
            <person name="Zimprich A."/>
            <person name="Biskup S."/>
            <person name="Leitner P."/>
            <person name="Lichtner P."/>
            <person name="Farrer M."/>
            <person name="Lincoln S.J."/>
            <person name="Kachergus J.M."/>
            <person name="Hulihan M.M."/>
            <person name="Uitti R.J."/>
            <person name="Calne D.B."/>
            <person name="Stoessl A.J."/>
            <person name="Pfeiffer R.F."/>
            <person name="Patenge N."/>
            <person name="Carballo Carbajal I."/>
            <person name="Vieregge P."/>
            <person name="Asmus F."/>
            <person name="Mueller-Myhsok B."/>
            <person name="Dickson D.W."/>
            <person name="Meitinger T."/>
            <person name="Strom T.M."/>
            <person name="Wszolek Z.K."/>
            <person name="Gasser T."/>
        </authorList>
    </citation>
    <scope>NUCLEOTIDE SEQUENCE [MRNA]</scope>
    <source>
        <strain>Swiss Webster</strain>
        <tissue>Embryo</tissue>
    </source>
</reference>
<reference key="2">
    <citation type="journal article" date="2009" name="PLoS Biol.">
        <title>Lineage-specific biology revealed by a finished genome assembly of the mouse.</title>
        <authorList>
            <person name="Church D.M."/>
            <person name="Goodstadt L."/>
            <person name="Hillier L.W."/>
            <person name="Zody M.C."/>
            <person name="Goldstein S."/>
            <person name="She X."/>
            <person name="Bult C.J."/>
            <person name="Agarwala R."/>
            <person name="Cherry J.L."/>
            <person name="DiCuccio M."/>
            <person name="Hlavina W."/>
            <person name="Kapustin Y."/>
            <person name="Meric P."/>
            <person name="Maglott D."/>
            <person name="Birtle Z."/>
            <person name="Marques A.C."/>
            <person name="Graves T."/>
            <person name="Zhou S."/>
            <person name="Teague B."/>
            <person name="Potamousis K."/>
            <person name="Churas C."/>
            <person name="Place M."/>
            <person name="Herschleb J."/>
            <person name="Runnheim R."/>
            <person name="Forrest D."/>
            <person name="Amos-Landgraf J."/>
            <person name="Schwartz D.C."/>
            <person name="Cheng Z."/>
            <person name="Lindblad-Toh K."/>
            <person name="Eichler E.E."/>
            <person name="Ponting C.P."/>
        </authorList>
    </citation>
    <scope>NUCLEOTIDE SEQUENCE [LARGE SCALE GENOMIC DNA]</scope>
    <source>
        <strain>C57BL/6J</strain>
    </source>
</reference>
<reference key="3">
    <citation type="journal article" date="2005" name="Science">
        <title>The transcriptional landscape of the mammalian genome.</title>
        <authorList>
            <person name="Carninci P."/>
            <person name="Kasukawa T."/>
            <person name="Katayama S."/>
            <person name="Gough J."/>
            <person name="Frith M.C."/>
            <person name="Maeda N."/>
            <person name="Oyama R."/>
            <person name="Ravasi T."/>
            <person name="Lenhard B."/>
            <person name="Wells C."/>
            <person name="Kodzius R."/>
            <person name="Shimokawa K."/>
            <person name="Bajic V.B."/>
            <person name="Brenner S.E."/>
            <person name="Batalov S."/>
            <person name="Forrest A.R."/>
            <person name="Zavolan M."/>
            <person name="Davis M.J."/>
            <person name="Wilming L.G."/>
            <person name="Aidinis V."/>
            <person name="Allen J.E."/>
            <person name="Ambesi-Impiombato A."/>
            <person name="Apweiler R."/>
            <person name="Aturaliya R.N."/>
            <person name="Bailey T.L."/>
            <person name="Bansal M."/>
            <person name="Baxter L."/>
            <person name="Beisel K.W."/>
            <person name="Bersano T."/>
            <person name="Bono H."/>
            <person name="Chalk A.M."/>
            <person name="Chiu K.P."/>
            <person name="Choudhary V."/>
            <person name="Christoffels A."/>
            <person name="Clutterbuck D.R."/>
            <person name="Crowe M.L."/>
            <person name="Dalla E."/>
            <person name="Dalrymple B.P."/>
            <person name="de Bono B."/>
            <person name="Della Gatta G."/>
            <person name="di Bernardo D."/>
            <person name="Down T."/>
            <person name="Engstrom P."/>
            <person name="Fagiolini M."/>
            <person name="Faulkner G."/>
            <person name="Fletcher C.F."/>
            <person name="Fukushima T."/>
            <person name="Furuno M."/>
            <person name="Futaki S."/>
            <person name="Gariboldi M."/>
            <person name="Georgii-Hemming P."/>
            <person name="Gingeras T.R."/>
            <person name="Gojobori T."/>
            <person name="Green R.E."/>
            <person name="Gustincich S."/>
            <person name="Harbers M."/>
            <person name="Hayashi Y."/>
            <person name="Hensch T.K."/>
            <person name="Hirokawa N."/>
            <person name="Hill D."/>
            <person name="Huminiecki L."/>
            <person name="Iacono M."/>
            <person name="Ikeo K."/>
            <person name="Iwama A."/>
            <person name="Ishikawa T."/>
            <person name="Jakt M."/>
            <person name="Kanapin A."/>
            <person name="Katoh M."/>
            <person name="Kawasawa Y."/>
            <person name="Kelso J."/>
            <person name="Kitamura H."/>
            <person name="Kitano H."/>
            <person name="Kollias G."/>
            <person name="Krishnan S.P."/>
            <person name="Kruger A."/>
            <person name="Kummerfeld S.K."/>
            <person name="Kurochkin I.V."/>
            <person name="Lareau L.F."/>
            <person name="Lazarevic D."/>
            <person name="Lipovich L."/>
            <person name="Liu J."/>
            <person name="Liuni S."/>
            <person name="McWilliam S."/>
            <person name="Madan Babu M."/>
            <person name="Madera M."/>
            <person name="Marchionni L."/>
            <person name="Matsuda H."/>
            <person name="Matsuzawa S."/>
            <person name="Miki H."/>
            <person name="Mignone F."/>
            <person name="Miyake S."/>
            <person name="Morris K."/>
            <person name="Mottagui-Tabar S."/>
            <person name="Mulder N."/>
            <person name="Nakano N."/>
            <person name="Nakauchi H."/>
            <person name="Ng P."/>
            <person name="Nilsson R."/>
            <person name="Nishiguchi S."/>
            <person name="Nishikawa S."/>
            <person name="Nori F."/>
            <person name="Ohara O."/>
            <person name="Okazaki Y."/>
            <person name="Orlando V."/>
            <person name="Pang K.C."/>
            <person name="Pavan W.J."/>
            <person name="Pavesi G."/>
            <person name="Pesole G."/>
            <person name="Petrovsky N."/>
            <person name="Piazza S."/>
            <person name="Reed J."/>
            <person name="Reid J.F."/>
            <person name="Ring B.Z."/>
            <person name="Ringwald M."/>
            <person name="Rost B."/>
            <person name="Ruan Y."/>
            <person name="Salzberg S.L."/>
            <person name="Sandelin A."/>
            <person name="Schneider C."/>
            <person name="Schoenbach C."/>
            <person name="Sekiguchi K."/>
            <person name="Semple C.A."/>
            <person name="Seno S."/>
            <person name="Sessa L."/>
            <person name="Sheng Y."/>
            <person name="Shibata Y."/>
            <person name="Shimada H."/>
            <person name="Shimada K."/>
            <person name="Silva D."/>
            <person name="Sinclair B."/>
            <person name="Sperling S."/>
            <person name="Stupka E."/>
            <person name="Sugiura K."/>
            <person name="Sultana R."/>
            <person name="Takenaka Y."/>
            <person name="Taki K."/>
            <person name="Tammoja K."/>
            <person name="Tan S.L."/>
            <person name="Tang S."/>
            <person name="Taylor M.S."/>
            <person name="Tegner J."/>
            <person name="Teichmann S.A."/>
            <person name="Ueda H.R."/>
            <person name="van Nimwegen E."/>
            <person name="Verardo R."/>
            <person name="Wei C.L."/>
            <person name="Yagi K."/>
            <person name="Yamanishi H."/>
            <person name="Zabarovsky E."/>
            <person name="Zhu S."/>
            <person name="Zimmer A."/>
            <person name="Hide W."/>
            <person name="Bult C."/>
            <person name="Grimmond S.M."/>
            <person name="Teasdale R.D."/>
            <person name="Liu E.T."/>
            <person name="Brusic V."/>
            <person name="Quackenbush J."/>
            <person name="Wahlestedt C."/>
            <person name="Mattick J.S."/>
            <person name="Hume D.A."/>
            <person name="Kai C."/>
            <person name="Sasaki D."/>
            <person name="Tomaru Y."/>
            <person name="Fukuda S."/>
            <person name="Kanamori-Katayama M."/>
            <person name="Suzuki M."/>
            <person name="Aoki J."/>
            <person name="Arakawa T."/>
            <person name="Iida J."/>
            <person name="Imamura K."/>
            <person name="Itoh M."/>
            <person name="Kato T."/>
            <person name="Kawaji H."/>
            <person name="Kawagashira N."/>
            <person name="Kawashima T."/>
            <person name="Kojima M."/>
            <person name="Kondo S."/>
            <person name="Konno H."/>
            <person name="Nakano K."/>
            <person name="Ninomiya N."/>
            <person name="Nishio T."/>
            <person name="Okada M."/>
            <person name="Plessy C."/>
            <person name="Shibata K."/>
            <person name="Shiraki T."/>
            <person name="Suzuki S."/>
            <person name="Tagami M."/>
            <person name="Waki K."/>
            <person name="Watahiki A."/>
            <person name="Okamura-Oho Y."/>
            <person name="Suzuki H."/>
            <person name="Kawai J."/>
            <person name="Hayashizaki Y."/>
        </authorList>
    </citation>
    <scope>NUCLEOTIDE SEQUENCE [LARGE SCALE MRNA] OF 1-946 AND 1162-1707</scope>
    <source>
        <strain>C57BL/6J</strain>
        <tissue>Kidney</tissue>
    </source>
</reference>
<reference key="4">
    <citation type="journal article" date="2004" name="Genome Res.">
        <title>The status, quality, and expansion of the NIH full-length cDNA project: the Mammalian Gene Collection (MGC).</title>
        <authorList>
            <consortium name="The MGC Project Team"/>
        </authorList>
    </citation>
    <scope>NUCLEOTIDE SEQUENCE [LARGE SCALE MRNA] OF 1688-2527</scope>
    <source>
        <strain>FVB/N</strain>
        <tissue>Kidney</tissue>
    </source>
</reference>
<reference key="5">
    <citation type="journal article" date="2006" name="Ann. Neurol.">
        <title>LRRK2 expression linked to dopamine-innervated areas.</title>
        <authorList>
            <person name="Galter D."/>
            <person name="Westerlund M."/>
            <person name="Carmine A."/>
            <person name="Lindqvist E."/>
            <person name="Sydow O."/>
            <person name="Olson L."/>
        </authorList>
    </citation>
    <scope>TISSUE SPECIFICITY</scope>
</reference>
<reference key="6">
    <citation type="journal article" date="2006" name="Ann. Neurol.">
        <title>Localization of LRRK2 to membranous and vesicular structures in mammalian brain.</title>
        <authorList>
            <person name="Biskup S."/>
            <person name="Moore D.J."/>
            <person name="Celsi F."/>
            <person name="Higashi S."/>
            <person name="West A.B."/>
            <person name="Andrabi S.A."/>
            <person name="Kurkinen K."/>
            <person name="Yu S.W."/>
            <person name="Savitt J.M."/>
            <person name="Waldvogel H.J."/>
            <person name="Faull R.L."/>
            <person name="Emson P.C."/>
            <person name="Torp R."/>
            <person name="Ottersen O.P."/>
            <person name="Dawson T.M."/>
            <person name="Dawson V.L."/>
        </authorList>
    </citation>
    <scope>SUBCELLULAR LOCATION</scope>
    <scope>TISSUE SPECIFICITY</scope>
</reference>
<reference key="7">
    <citation type="journal article" date="2006" name="Eur. J. Neurosci.">
        <title>LRRK2 is expressed in areas affected by Parkinson's disease in the adult mouse brain.</title>
        <authorList>
            <person name="Simon-Sanchez J."/>
            <person name="Herranz-Perez V."/>
            <person name="Olucha-Bordonau F."/>
            <person name="Perez-Tur J."/>
        </authorList>
    </citation>
    <scope>TISSUE SPECIFICITY</scope>
</reference>
<reference key="8">
    <citation type="journal article" date="2006" name="Neuroscience">
        <title>Anatomical localization of leucine-rich repeat kinase 2 in mouse brain.</title>
        <authorList>
            <person name="Melrose H."/>
            <person name="Lincoln S."/>
            <person name="Tyndall G."/>
            <person name="Dickson D."/>
            <person name="Farrer M."/>
        </authorList>
    </citation>
    <scope>TISSUE SPECIFICITY</scope>
</reference>
<reference key="9">
    <citation type="journal article" date="2010" name="Cell">
        <title>A tissue-specific atlas of mouse protein phosphorylation and expression.</title>
        <authorList>
            <person name="Huttlin E.L."/>
            <person name="Jedrychowski M.P."/>
            <person name="Elias J.E."/>
            <person name="Goswami T."/>
            <person name="Rad R."/>
            <person name="Beausoleil S.A."/>
            <person name="Villen J."/>
            <person name="Haas W."/>
            <person name="Sowa M.E."/>
            <person name="Gygi S.P."/>
        </authorList>
    </citation>
    <scope>PHOSPHORYLATION [LARGE SCALE ANALYSIS] AT SER-935</scope>
    <scope>IDENTIFICATION BY MASS SPECTROMETRY [LARGE SCALE ANALYSIS]</scope>
    <source>
        <tissue>Kidney</tissue>
        <tissue>Lung</tissue>
        <tissue>Spleen</tissue>
        <tissue>Testis</tissue>
    </source>
</reference>
<reference key="10">
    <citation type="journal article" date="2013" name="Neuron">
        <title>RAB7L1 interacts with LRRK2 to modify intraneuronal protein sorting and Parkinson's disease risk.</title>
        <authorList>
            <person name="MacLeod D.A."/>
            <person name="Rhinn H."/>
            <person name="Kuwahara T."/>
            <person name="Zolin A."/>
            <person name="Di Paolo G."/>
            <person name="McCabe B.D."/>
            <person name="MacCabe B.D."/>
            <person name="Marder K.S."/>
            <person name="Honig L.S."/>
            <person name="Clark L.N."/>
            <person name="Small S.A."/>
            <person name="Abeliovich A."/>
        </authorList>
    </citation>
    <scope>INTERACTION WITH VPS35 AND RAB29</scope>
</reference>
<reference key="11">
    <citation type="journal article" date="2014" name="EMBO J.">
        <title>Leucine-rich repeat kinase 2 regulates Sec16A at ER exit sites to allow ER-Golgi export.</title>
        <authorList>
            <person name="Cho H.J."/>
            <person name="Yu J."/>
            <person name="Xie C."/>
            <person name="Rudrabhatla P."/>
            <person name="Chen X."/>
            <person name="Wu J."/>
            <person name="Parisiadou L."/>
            <person name="Liu G."/>
            <person name="Sun L."/>
            <person name="Ma B."/>
            <person name="Ding J."/>
            <person name="Liu Z."/>
            <person name="Cai H."/>
        </authorList>
    </citation>
    <scope>FUNCTION</scope>
    <scope>SUBCELLULAR LOCATION</scope>
    <scope>INTERACTION WITH SEC16A</scope>
    <scope>MUTAGENESIS OF ARG-1441</scope>
</reference>
<reference key="12">
    <citation type="journal article" date="2016" name="Elife">
        <title>Phosphoproteomics reveals that Parkinson's disease kinase LRRK2 regulates a subset of Rab GTPases.</title>
        <authorList>
            <person name="Steger M."/>
            <person name="Tonelli F."/>
            <person name="Ito G."/>
            <person name="Davies P."/>
            <person name="Trost M."/>
            <person name="Vetter M."/>
            <person name="Wachter S."/>
            <person name="Lorentzen E."/>
            <person name="Duddy G."/>
            <person name="Wilson S."/>
            <person name="Baptista M.A."/>
            <person name="Fiske B.K."/>
            <person name="Fell M.J."/>
            <person name="Morrow J.A."/>
            <person name="Reith A.D."/>
            <person name="Alessi D.R."/>
            <person name="Mann M."/>
        </authorList>
    </citation>
    <scope>FUNCTION</scope>
    <scope>CATALYTIC ACTIVITY</scope>
    <scope>ACTIVITY REGULATION</scope>
    <scope>PHOSPHORYLATION AT SER-935</scope>
    <scope>MUTAGENESIS OF ALA-2016 AND GLY-2019</scope>
</reference>
<reference key="13">
    <citation type="journal article" date="2017" name="Elife">
        <title>Systematic proteomic analysis of LRRK2-mediated Rab GTPase phosphorylation establishes a connection to ciliogenesis.</title>
        <authorList>
            <person name="Steger M."/>
            <person name="Diez F."/>
            <person name="Dhekne H.S."/>
            <person name="Lis P."/>
            <person name="Nirujogi R.S."/>
            <person name="Karayel O."/>
            <person name="Tonelli F."/>
            <person name="Martinez T.N."/>
            <person name="Lorentzen E."/>
            <person name="Pfeffer S.R."/>
            <person name="Alessi D.R."/>
            <person name="Mann M."/>
        </authorList>
    </citation>
    <scope>FUNCTION</scope>
    <scope>CATALYTIC ACTIVITY</scope>
    <scope>MUTAGENESIS OF ARG-1441 AND GLY-2019</scope>
</reference>
<reference key="14">
    <citation type="journal article" date="2017" name="Sci. Signal.">
        <title>Phosphorylation of amyloid precursor protein by mutant LRRK2 promotes AICD activity and neurotoxicity in Parkinson's disease.</title>
        <authorList>
            <person name="Chen Z.C."/>
            <person name="Zhang W."/>
            <person name="Chua L.L."/>
            <person name="Chai C."/>
            <person name="Li R."/>
            <person name="Lin L."/>
            <person name="Cao Z."/>
            <person name="Angeles D.C."/>
            <person name="Stanton L.W."/>
            <person name="Peng J.H."/>
            <person name="Zhou Z.D."/>
            <person name="Lim K.L."/>
            <person name="Zeng L."/>
            <person name="Tan E.K."/>
        </authorList>
    </citation>
    <scope>FUNCTION</scope>
    <scope>CATALYTIC ACTIVITY</scope>
    <scope>ACTIVITY REGULATION</scope>
    <scope>INTERACTION WITH APP</scope>
    <scope>TISSUE SPECIFICITY</scope>
    <scope>MUTAGENESIS OF GLY-2019</scope>
</reference>
<reference key="15">
    <citation type="journal article" date="2018" name="Elife">
        <title>A pathway for Parkinson's Disease LRRK2 kinase to block primary cilia and Sonic hedgehog signaling in the brain.</title>
        <authorList>
            <person name="Dhekne H.S."/>
            <person name="Yanatori I."/>
            <person name="Gomez R.C."/>
            <person name="Tonelli F."/>
            <person name="Diez F."/>
            <person name="Schuele B."/>
            <person name="Steger M."/>
            <person name="Alessi D.R."/>
            <person name="Pfeffer S.R."/>
        </authorList>
    </citation>
    <scope>FUNCTION</scope>
    <scope>MUTAGENESIS OF ARG-1441</scope>
</reference>
<reference key="16">
    <citation type="journal article" date="2018" name="EMBO J.">
        <title>Rab29 activation of the Parkinson's disease-associated LRRK2 kinase.</title>
        <authorList>
            <person name="Purlyte E."/>
            <person name="Dhekne H.S."/>
            <person name="Sarhan A.R."/>
            <person name="Gomez R."/>
            <person name="Lis P."/>
            <person name="Wightman M."/>
            <person name="Martinez T.N."/>
            <person name="Tonelli F."/>
            <person name="Pfeffer S.R."/>
            <person name="Alessi D.R."/>
        </authorList>
    </citation>
    <scope>FUNCTION</scope>
    <scope>SUBCELLULAR LOCATION</scope>
    <scope>MUTAGENESIS OF ARG-1441</scope>
</reference>
<reference key="17">
    <citation type="journal article" date="2013" name="J. Bone Miner. Res.">
        <title>Targeted disruption of leucine-rich repeat kinase 1 but not leucine-rich repeat kinase 2 in mice causes severe osteopetrosis.</title>
        <authorList>
            <person name="Xing W."/>
            <person name="Liu J."/>
            <person name="Cheng S."/>
            <person name="Vogel P."/>
            <person name="Mohan S."/>
            <person name="Brommage R."/>
        </authorList>
    </citation>
    <scope>DISRUPTION PHENOTYPE</scope>
</reference>
<reference evidence="21" key="18">
    <citation type="journal article" date="2018" name="Proc. Natl. Acad. Sci. U.S.A.">
        <title>LRRK2 and its substrate Rab GTPases are sequentially targeted onto stressed lysosomes and maintain their homeostasis.</title>
        <authorList>
            <person name="Eguchi T."/>
            <person name="Kuwahara T."/>
            <person name="Sakurai M."/>
            <person name="Komori T."/>
            <person name="Fujimoto T."/>
            <person name="Ito G."/>
            <person name="Yoshimura S.I."/>
            <person name="Harada A."/>
            <person name="Fukuda M."/>
            <person name="Koike M."/>
            <person name="Iwatsubo T."/>
        </authorList>
    </citation>
    <scope>FUNCTION</scope>
    <scope>SUBCELLULAR LOCATION</scope>
    <scope>DISRUPTION PHENOTYPE</scope>
</reference>
<reference evidence="21" key="19">
    <citation type="journal article" date="2024" name="J. Cell Biol.">
        <title>The V-ATPase-ATG16L1 axis recruits LRRK2 to facilitate the lysosomal stress response.</title>
        <authorList>
            <person name="Eguchi T."/>
            <person name="Sakurai M."/>
            <person name="Wang Y."/>
            <person name="Saito C."/>
            <person name="Yoshii G."/>
            <person name="Wileman T."/>
            <person name="Mizushima N."/>
            <person name="Kuwahara T."/>
            <person name="Iwatsubo T."/>
        </authorList>
    </citation>
    <scope>FUNCTION</scope>
    <scope>SUBCELLULAR LOCATION</scope>
</reference>
<feature type="chain" id="PRO_0000086239" description="Leucine-rich repeat serine/threonine-protein kinase 2">
    <location>
        <begin position="1"/>
        <end position="2527"/>
    </location>
</feature>
<feature type="repeat" description="LRR 1" evidence="1">
    <location>
        <begin position="983"/>
        <end position="1004"/>
    </location>
</feature>
<feature type="repeat" description="LRR 2" evidence="1">
    <location>
        <begin position="1012"/>
        <end position="1033"/>
    </location>
</feature>
<feature type="repeat" description="LRR 3" evidence="1">
    <location>
        <begin position="1036"/>
        <end position="1057"/>
    </location>
</feature>
<feature type="repeat" description="LRR 4" evidence="1">
    <location>
        <begin position="1059"/>
        <end position="1080"/>
    </location>
</feature>
<feature type="repeat" description="LRR 5" evidence="1">
    <location>
        <begin position="1084"/>
        <end position="1105"/>
    </location>
</feature>
<feature type="repeat" description="LRR 6" evidence="1">
    <location>
        <begin position="1108"/>
        <end position="1129"/>
    </location>
</feature>
<feature type="repeat" description="LRR 7" evidence="1">
    <location>
        <begin position="1130"/>
        <end position="1150"/>
    </location>
</feature>
<feature type="repeat" description="LRR 8" evidence="1">
    <location>
        <begin position="1156"/>
        <end position="1171"/>
    </location>
</feature>
<feature type="repeat" description="LRR 9" evidence="1">
    <location>
        <begin position="1174"/>
        <end position="1196"/>
    </location>
</feature>
<feature type="repeat" description="LRR 10" evidence="1">
    <location>
        <begin position="1197"/>
        <end position="1218"/>
    </location>
</feature>
<feature type="repeat" description="LRR 11" evidence="1">
    <location>
        <begin position="1221"/>
        <end position="1245"/>
    </location>
</feature>
<feature type="repeat" description="LRR 12" evidence="1">
    <location>
        <begin position="1246"/>
        <end position="1267"/>
    </location>
</feature>
<feature type="repeat" description="LRR 13" evidence="1">
    <location>
        <begin position="1269"/>
        <end position="1291"/>
    </location>
</feature>
<feature type="domain" description="Roc" evidence="4">
    <location>
        <begin position="1328"/>
        <end position="1511"/>
    </location>
</feature>
<feature type="domain" description="COR" evidence="2">
    <location>
        <begin position="1543"/>
        <end position="1740"/>
    </location>
</feature>
<feature type="domain" description="Protein kinase" evidence="3">
    <location>
        <begin position="1879"/>
        <end position="2146"/>
    </location>
</feature>
<feature type="repeat" description="WD 1" evidence="1">
    <location>
        <begin position="2139"/>
        <end position="2183"/>
    </location>
</feature>
<feature type="repeat" description="WD 2" evidence="1">
    <location>
        <begin position="2188"/>
        <end position="2228"/>
    </location>
</feature>
<feature type="repeat" description="WD 3" evidence="1">
    <location>
        <begin position="2233"/>
        <end position="2276"/>
    </location>
</feature>
<feature type="repeat" description="WD 4" evidence="1">
    <location>
        <begin position="2281"/>
        <end position="2327"/>
    </location>
</feature>
<feature type="repeat" description="WD 5" evidence="1">
    <location>
        <begin position="2333"/>
        <end position="2377"/>
    </location>
</feature>
<feature type="repeat" description="WD 6" evidence="1">
    <location>
        <begin position="2402"/>
        <end position="2438"/>
    </location>
</feature>
<feature type="repeat" description="WD 7" evidence="1">
    <location>
        <begin position="2443"/>
        <end position="2497"/>
    </location>
</feature>
<feature type="region of interest" description="Required for RAB29-mediated activation" evidence="1">
    <location>
        <begin position="1"/>
        <end position="969"/>
    </location>
</feature>
<feature type="region of interest" description="Disordered" evidence="6">
    <location>
        <begin position="957"/>
        <end position="979"/>
    </location>
</feature>
<feature type="coiled-coil region" evidence="2">
    <location>
        <begin position="9"/>
        <end position="33"/>
    </location>
</feature>
<feature type="compositionally biased region" description="Low complexity" evidence="6">
    <location>
        <begin position="961"/>
        <end position="978"/>
    </location>
</feature>
<feature type="active site" description="Proton acceptor" evidence="3 5">
    <location>
        <position position="1994"/>
    </location>
</feature>
<feature type="binding site" evidence="1 4">
    <location>
        <begin position="1341"/>
        <end position="1348"/>
    </location>
    <ligand>
        <name>GTP</name>
        <dbReference type="ChEBI" id="CHEBI:37565"/>
    </ligand>
</feature>
<feature type="binding site" evidence="1">
    <location>
        <position position="1885"/>
    </location>
    <ligand>
        <name>ATP</name>
        <dbReference type="ChEBI" id="CHEBI:30616"/>
    </ligand>
</feature>
<feature type="binding site" evidence="1">
    <location>
        <position position="1887"/>
    </location>
    <ligand>
        <name>ATP</name>
        <dbReference type="ChEBI" id="CHEBI:30616"/>
    </ligand>
</feature>
<feature type="binding site" evidence="1">
    <location>
        <position position="1888"/>
    </location>
    <ligand>
        <name>ATP</name>
        <dbReference type="ChEBI" id="CHEBI:30616"/>
    </ligand>
</feature>
<feature type="binding site" evidence="1">
    <location>
        <position position="1891"/>
    </location>
    <ligand>
        <name>ATP</name>
        <dbReference type="ChEBI" id="CHEBI:30616"/>
    </ligand>
</feature>
<feature type="binding site" evidence="1">
    <location>
        <position position="1893"/>
    </location>
    <ligand>
        <name>ATP</name>
        <dbReference type="ChEBI" id="CHEBI:30616"/>
    </ligand>
</feature>
<feature type="binding site" evidence="1">
    <location>
        <position position="1904"/>
    </location>
    <ligand>
        <name>ATP</name>
        <dbReference type="ChEBI" id="CHEBI:30616"/>
    </ligand>
</feature>
<feature type="binding site" evidence="3">
    <location>
        <position position="1906"/>
    </location>
    <ligand>
        <name>ATP</name>
        <dbReference type="ChEBI" id="CHEBI:30616"/>
    </ligand>
</feature>
<feature type="binding site" evidence="1">
    <location>
        <position position="1947"/>
    </location>
    <ligand>
        <name>ATP</name>
        <dbReference type="ChEBI" id="CHEBI:30616"/>
    </ligand>
</feature>
<feature type="binding site" evidence="1">
    <location>
        <position position="1948"/>
    </location>
    <ligand>
        <name>ATP</name>
        <dbReference type="ChEBI" id="CHEBI:30616"/>
    </ligand>
</feature>
<feature type="binding site" evidence="1">
    <location>
        <position position="1950"/>
    </location>
    <ligand>
        <name>ATP</name>
        <dbReference type="ChEBI" id="CHEBI:30616"/>
    </ligand>
</feature>
<feature type="binding site" evidence="1">
    <location>
        <position position="1954"/>
    </location>
    <ligand>
        <name>ATP</name>
        <dbReference type="ChEBI" id="CHEBI:30616"/>
    </ligand>
</feature>
<feature type="binding site" evidence="1">
    <location>
        <position position="1957"/>
    </location>
    <ligand>
        <name>ATP</name>
        <dbReference type="ChEBI" id="CHEBI:30616"/>
    </ligand>
</feature>
<feature type="binding site" evidence="1">
    <location>
        <position position="1998"/>
    </location>
    <ligand>
        <name>ATP</name>
        <dbReference type="ChEBI" id="CHEBI:30616"/>
    </ligand>
</feature>
<feature type="binding site" evidence="1">
    <location>
        <position position="2001"/>
    </location>
    <ligand>
        <name>ATP</name>
        <dbReference type="ChEBI" id="CHEBI:30616"/>
    </ligand>
</feature>
<feature type="binding site" evidence="1">
    <location>
        <position position="2016"/>
    </location>
    <ligand>
        <name>ATP</name>
        <dbReference type="ChEBI" id="CHEBI:30616"/>
    </ligand>
</feature>
<feature type="binding site" evidence="1">
    <location>
        <position position="2017"/>
    </location>
    <ligand>
        <name>ATP</name>
        <dbReference type="ChEBI" id="CHEBI:30616"/>
    </ligand>
</feature>
<feature type="binding site" evidence="4">
    <location>
        <begin position="2098"/>
        <end position="2121"/>
    </location>
    <ligand>
        <name>GTP</name>
        <dbReference type="ChEBI" id="CHEBI:37565"/>
    </ligand>
</feature>
<feature type="binding site" evidence="4">
    <location>
        <begin position="2295"/>
        <end position="2298"/>
    </location>
    <ligand>
        <name>GTP</name>
        <dbReference type="ChEBI" id="CHEBI:37565"/>
    </ligand>
</feature>
<feature type="modified residue" description="Phosphoserine" evidence="1">
    <location>
        <position position="910"/>
    </location>
</feature>
<feature type="modified residue" description="Phosphoserine" evidence="14 23">
    <location>
        <position position="935"/>
    </location>
</feature>
<feature type="modified residue" description="Phosphoserine" evidence="1">
    <location>
        <position position="955"/>
    </location>
</feature>
<feature type="modified residue" description="Phosphoserine" evidence="1">
    <location>
        <position position="973"/>
    </location>
</feature>
<feature type="modified residue" description="Phosphoserine; by autocatalysis" evidence="1">
    <location>
        <position position="1292"/>
    </location>
</feature>
<feature type="modified residue" description="Phosphoserine" evidence="1">
    <location>
        <position position="1444"/>
    </location>
</feature>
<feature type="mutagenesis site" description="Impaired ability to recruit SEC61A and SEC31A to endoplasmic reticulum exit sites. Impaired ability to regulate ER to Golgi vesicle-mediated transport." evidence="13">
    <original>R</original>
    <variation>C</variation>
    <location>
        <position position="1441"/>
    </location>
</feature>
<feature type="mutagenesis site" description="Increases kinase activity. Reduces primary ciliogenesis. Causes fragmentation of the trans-Golgi network." evidence="16 17 19">
    <original>R</original>
    <variation>G</variation>
    <location>
        <position position="1441"/>
    </location>
</feature>
<feature type="mutagenesis site" description="Does not affect kinase activity and decreases sensitivity towards small molecule kinase inhibitors." evidence="14">
    <original>A</original>
    <variation>T</variation>
    <location>
        <position position="2016"/>
    </location>
</feature>
<feature type="mutagenesis site" description="Increases kinase activity. Causes loss of dopaminergic neurons in the substantia nigra of 20-month old mice due to increased phosphorylation of APP. Reduces primary ciliogenesis." evidence="14 15 16">
    <original>G</original>
    <variation>S</variation>
    <location>
        <position position="2019"/>
    </location>
</feature>
<feature type="sequence conflict" description="In Ref. 3; BAC35052." evidence="21" ref="3">
    <original>E</original>
    <variation>K</variation>
    <location>
        <position position="343"/>
    </location>
</feature>
<feature type="sequence conflict" description="In Ref. 1; AAV63976." evidence="21" ref="1">
    <original>V</original>
    <variation>I</variation>
    <location>
        <position position="777"/>
    </location>
</feature>
<feature type="sequence conflict" description="In Ref. 1; AAV63976." evidence="21" ref="1">
    <original>K</original>
    <variation>N</variation>
    <location>
        <position position="863"/>
    </location>
</feature>
<feature type="sequence conflict" description="In Ref. 1; AAV63976." evidence="21" ref="1">
    <original>C</original>
    <variation>Y</variation>
    <location>
        <position position="925"/>
    </location>
</feature>
<feature type="sequence conflict" description="In Ref. 3; BAC28700." evidence="21" ref="3">
    <original>WSR</original>
    <variation>GQD</variation>
    <location>
        <begin position="1705"/>
        <end position="1707"/>
    </location>
</feature>
<proteinExistence type="evidence at protein level"/>
<sequence length="2527" mass="284732">MASGACQGCEEEEEEEALKKLIVRLNNVQEGKQIETLLQLLEDMLVFTYSDRASKLFEDKNFHVPLLIVLDSYMRVASVQQAGWSLLCKLIEVCPGTLQSLIGPQDIGNDWEVLGIHRLILKMLTVHHANVNLSIVGLKALDLLLDSGKLTLLILDEECDIFLLIFDAMHRYSANDEVQKLGCKALHVLFERVSEEQLTEFVENKDYTILLSTFGSFRRDKEIVYHVLCCLHSLAVTCSNVEVLMSGNVRCYNLVVEAMKAFPTNENIQEVSCSLFQKLTLGNFFNILVLNEVHVFVVKAVRQYPENAALQISALSCLALLTETIFLNQDLEERSETQEQSEEEDSEKLFWLEPCYKALVRHRKDKHVQEAACWALNNLLMYQNSLHEKIGDEDGQFPAHREVMLSMLMHSSSKDVFQAAAHALSTLLEQNVNFRKILLAKGVYLNVLELMQKHAHAPEVAESGCKMLSHLFEGSNPSLDTMAAVVPKILTVMKAHGTSLSVQLEALRAILHFVVPGLLEESREDSQCRPNVLRKQCFRTDIHKLVLVALNRFIGNPGIQKCGLKVISSLAHLPDATETLSLQGAVDSVLHTLQMYPDDQEIQCLGLHLMGCLMTKKNFCIGTGHLLAKILASTLQRFKDVAEVQTTGLQTTLSILELSVSFSKLLVHYSFDVVIFHQMSSSVVEQKDEQFLNLCCKCFAKVAVDDELKNTMLERACDQNNSIMVECLLLLGADANQVKGATSLIYQVCEKESSPKLVELLLNGGCREQDVRKALTVSIQKGDSQVISLLLRKLALDLANNSICLGGFGIGKIDPSWLGPLFPDKSSNLRKQTNTGSVLARKVLRYQMRNTLQEGVASGSDGKFSEDALAKFGEWTFIPDSSMDSVFGQSDDLDSEGSESSFLVKRKSNSISVGEVYRDLALQRCSPNAQRHSNSLGPVFDHEDLLRRKRKILSSDESLRSSRLPSHMRQSDSSSSLASEREHITSLDLSANELKDIDALSQKCCLSSHLEHLTKLELHQNSLTSFPQQLCETLKCLIHLDLHSNKFTSFPSFVLKMPRITNLDASRNDIGPTVVLDPAMKCPSLKQLNLSYNQLSSIPENLAQVVEKLEQLLLEGNKISGICSPLSLKELKILNLSKNHIPSLPGDFLEACSKVESFSARMNFLAAMPALPSSITSLKLSQNSFTCIPEAIFSLPHLRSLDMSHNNIECLPGPAHWKSLNLRELIFSKNQISTLDFSENPHVWSRVEKLHLSHNKLKEIPPEIGCLENLTSLDVSYNLELRSFPNEMGKLSKIWDLPLDGLHLNFDFKHVGCKAKDIIRFLQQRLKKAVPYNRMKLMIVGNTGSGKTTLLQQLMKMKKPELGMQGATVGIDVRDWSIQIRGKRRKDLVLNVWDFAGREEFYSTHPHFMTQRALYLAVYDLSKGQAEVDAMKPWLFNIKARASSSPVILVGTHLDVSDEKQRKACISKITKELLNKRGFPTIRDYHFVNATEESDALAKLRKTIINESLNFKIRDQPVVGQLIPDCYVELEKIILSERKAVPTEFPVINRKHLLQLVNEHQLQLDENELPHAVHFLNESGVLLHFQDPALQLSDLYFVEPKWLCKVMAQILTVKVDGCLKHPKGIISRRDVEKFLSKKKRFPKNYMMQYFKLLEKFQIALPIGEEYLLVPSSLSDHRPVIELPHCENSEIIIRLYEMPYFPMGFWSRLINRLLEISPFMLSGRERALRPNRMYWRQGIYLNWSPEAYCLVGSEVLDNRPESFLKITVPSCRKGCILLGRVVDHIDSLMEEWFPGLLEIDICGEGETLLKKWALYSFNDGEEHQKILLDELMKKAEEGDLLINPDQPRLTIPISQIAPDLILADLPRNIMLNNDELEFEEAPEFLLGDGSFGSVYRAAYEGEEVAVKIFNKHTSLRLLRQELVVLCHLHHPSLISLLAAGIRPRMLVMELASKGSLDRLLQQDKASLTRTLQHRIALHVADGLRYLHSAMIIYRDLKPHNVLLFTLYPNAAIIAKIADYGIAQYCCRMGIKTSEGTPGFRAPEVARGNVIYNQQADVYSFGLLLHDIWTTGSRIMEGLRFPNEFDELAIQGKLPDPVKEYGCAPWPMVEKLITKCLKENPQERPTSAQVFDILNSAELICLMRHILIPKNIIVECMVATNLNSKSATLWLGCGNTEKGQLSLFDLNTERYSYEEVADSRILCLALVHLAAEKESWVVCGTQSGALLVINVEEETKRHTLEKMTDSVTCLHCNSLAKQSKQSNFLLVGTADGNLMIFEDKAVKCKGAAPLKTLHIGDVSTPLMCLSESLNSSERHITWGGCGTKVFSFSNDFTIQKLIETKTNQLFSYAAFSDSNIIALAVDTALYIAKKNSPVVEVWDKKTEKLCELIDCVHFLKEVMVKLNKESKHQLSYSGRVKALCLQKNTALWIGTGGGHILLLDLSTRRVIRTIHNFCDSVRAMATAQLGSLKNVMLVLGYKRKSTEGIQEQKEIQSCLSIWDLNLPHEVQNLEKHIEVRTELADKMRKTSVE</sequence>
<accession>Q5S006</accession>
<accession>E9QNJ2</accession>
<accession>Q8BWG7</accession>
<accession>Q8BZJ6</accession>
<accession>Q8CI84</accession>
<accession>Q8K062</accession>
<protein>
    <recommendedName>
        <fullName>Leucine-rich repeat serine/threonine-protein kinase 2</fullName>
        <ecNumber evidence="14 15 16">2.7.11.1</ecNumber>
        <ecNumber evidence="1">3.6.5.-</ecNumber>
    </recommendedName>
</protein>
<comment type="function">
    <text evidence="1 13 14 15 16 17 18 19 20">Serine/threonine-protein kinase which phosphorylates a broad range of proteins involved in multiple processes such as neuronal plasticity, innate immunity, autophagy, and vesicle trafficking (PubMed:26824392, PubMed:28720718, PubMed:29125462, PubMed:29212815, PubMed:30398148). Is a key regulator of RAB GTPases by regulating the GTP/GDP exchange and interaction partners of RABs through phosphorylation (PubMed:26824392, PubMed:28720718, PubMed:29125462, PubMed:29212815, PubMed:30398148). Phosphorylates RAB3A, RAB3B, RAB3C, RAB3D, RAB8A, RAB8B, RAB10, RAB12, RAB29, RAB35, and RAB43 (PubMed:26824392, PubMed:28720718, PubMed:29212815, PubMed:30398148). Regulates the RAB3IP-catalyzed GDP/GTP exchange for RAB8A through the phosphorylation of 'Thr-72' on RAB8A (By similarity). Inhibits the interaction between RAB8A and GDI1 and/or GDI2 by phosphorylating 'Thr-72' on RAB8A (By similarity). Regulates primary ciliogenesis through phosphorylation of RAB8A and RAB10, which promotes SHH signaling in the brain (PubMed:29125462, PubMed:30398148). Together with RAB29, plays a role in the retrograde trafficking pathway for recycling proteins, such as mannose-6-phosphate receptor (M6PR), between lysosomes and the Golgi apparatus in a retromer-dependent manner (By similarity). Regulates neuronal process morphology in the intact central nervous system (CNS) (By similarity). Plays an important role in recruiting SEC16A to endoplasmic reticulum exit sites (ERES) and in regulating ER to Golgi vesicle-mediated transport and ERES organization (PubMed:25201882). Positively regulates autophagy through a calcium-dependent activation of the CaMKK/AMPK signaling pathway (By similarity). The process involves activation of nicotinic acid adenine dinucleotide phosphate (NAADP) receptors, increase in lysosomal pH, and calcium release from lysosomes (By similarity). Phosphorylates PRDX3 (By similarity). By phosphorylating APP on 'Thr-743', which promotes the production and the nuclear translocation of the APP intracellular domain (AICD), regulates dopaminergic neuron apoptosis (PubMed:28720718). Acts as a positive regulator of innate immunity by mediating phosphorylation of RIPK2 downstream of NOD1 and NOD2, thereby enhancing RIPK2 activation (By similarity). Independent of its kinase activity, inhibits the proteasomal degradation of MAPT, thus promoting MAPT oligomerization and secretion (By similarity). In addition, has GTPase activity via its Roc domain which regulates LRKK2 kinase activity (By similarity). Recruited by RAB29/RAB7L1 to overloaded lysosomes where it phosphorylates and stabilizes RAB8A and RAB10 which promote lysosomal content release and suppress lysosomal enlargement through the EHBP1 and EHBP1L1 effector proteins (PubMed:30209220, PubMed:38227290).</text>
</comment>
<comment type="catalytic activity">
    <reaction evidence="14 15 16">
        <text>L-threonyl-[protein] + ATP = O-phospho-L-threonyl-[protein] + ADP + H(+)</text>
        <dbReference type="Rhea" id="RHEA:46608"/>
        <dbReference type="Rhea" id="RHEA-COMP:11060"/>
        <dbReference type="Rhea" id="RHEA-COMP:11605"/>
        <dbReference type="ChEBI" id="CHEBI:15378"/>
        <dbReference type="ChEBI" id="CHEBI:30013"/>
        <dbReference type="ChEBI" id="CHEBI:30616"/>
        <dbReference type="ChEBI" id="CHEBI:61977"/>
        <dbReference type="ChEBI" id="CHEBI:456216"/>
        <dbReference type="EC" id="2.7.11.1"/>
    </reaction>
</comment>
<comment type="catalytic activity">
    <reaction evidence="14 15 16">
        <text>L-seryl-[protein] + ATP = O-phospho-L-seryl-[protein] + ADP + H(+)</text>
        <dbReference type="Rhea" id="RHEA:17989"/>
        <dbReference type="Rhea" id="RHEA-COMP:9863"/>
        <dbReference type="Rhea" id="RHEA-COMP:11604"/>
        <dbReference type="ChEBI" id="CHEBI:15378"/>
        <dbReference type="ChEBI" id="CHEBI:29999"/>
        <dbReference type="ChEBI" id="CHEBI:30616"/>
        <dbReference type="ChEBI" id="CHEBI:83421"/>
        <dbReference type="ChEBI" id="CHEBI:456216"/>
        <dbReference type="EC" id="2.7.11.1"/>
    </reaction>
</comment>
<comment type="catalytic activity">
    <reaction evidence="1">
        <text>GTP + H2O = GDP + phosphate + H(+)</text>
        <dbReference type="Rhea" id="RHEA:19669"/>
        <dbReference type="ChEBI" id="CHEBI:15377"/>
        <dbReference type="ChEBI" id="CHEBI:15378"/>
        <dbReference type="ChEBI" id="CHEBI:37565"/>
        <dbReference type="ChEBI" id="CHEBI:43474"/>
        <dbReference type="ChEBI" id="CHEBI:58189"/>
    </reaction>
</comment>
<comment type="cofactor">
    <cofactor evidence="1">
        <name>Mg(2+)</name>
        <dbReference type="ChEBI" id="CHEBI:18420"/>
    </cofactor>
</comment>
<comment type="activity regulation">
    <text evidence="1 14 15 22">Kinase activity is regulated by the GTPase activity of the ROC domain (By similarity). GTP-bound LRRK2 kinase activity is stimulated by RAB29 (By similarity). Phosphorylation of RAB10 'Thr-73' is stimulated by RAB29 and RAB32 (By similarity). Inhibited by small molecule inhibitors MLi-2 and LRRK2-IN-1 (PubMed:26824392, PubMed:28720718).</text>
</comment>
<comment type="subunit">
    <text evidence="1 11 13 15">Homodimer (By similarity). Homotetramer; when activated by GTP-bound RAB29 (By similarity). Interacts with PRKN, PRDX3 and TPCN2 (By similarity). Interacts with VPS35 (PubMed:23395371). Interacts (via N-terminus) with RAB29; this interaction is direct and stimulates kinase activity (By similarity). Interacts (via ROC domain) with SEC16A (PubMed:25201882). Interacts with APP; interaction promotes phosphorylation of 'Thr-743' of APP (PubMed:28720718). Interacts with MAPT (By similarity). Interacts with RAB8A, RAB10, and RAB12 (By similarity). Interacts (via N-terminus) with RAB32 (By similarity). Interacts with YWHAG; this interaction is dependent on phosphorylation of Ser-910 and either Ser-935 or Ser-1444 (By similarity). Interacts with SFN; this interaction is dependent on phosphorylation of Ser-910 and/or Ser-935 (By similarity).</text>
</comment>
<comment type="interaction">
    <interactant intactId="EBI-2693710">
        <id>Q5S006</id>
    </interactant>
    <interactant intactId="EBI-6288020">
        <id>Q9EPJ9</id>
        <label>Arfgap1</label>
    </interactant>
    <organismsDiffer>false</organismsDiffer>
    <experiments>3</experiments>
</comment>
<comment type="interaction">
    <interactant intactId="EBI-2693710">
        <id>Q5S006</id>
    </interactant>
    <interactant intactId="EBI-770763">
        <id>O55143</id>
        <label>Atp2a2</label>
    </interactant>
    <organismsDiffer>false</organismsDiffer>
    <experiments>9</experiments>
</comment>
<comment type="interaction">
    <interactant intactId="EBI-2693710">
        <id>Q5S006</id>
    </interactant>
    <interactant intactId="EBI-2365792">
        <id>Q8K1M6</id>
        <label>Dnm1l</label>
    </interactant>
    <organismsDiffer>false</organismsDiffer>
    <experiments>5</experiments>
</comment>
<comment type="interaction">
    <interactant intactId="EBI-2693710">
        <id>Q5S006</id>
    </interactant>
    <interactant intactId="EBI-2693710">
        <id>Q5S006</id>
        <label>Lrrk2</label>
    </interactant>
    <organismsDiffer>false</organismsDiffer>
    <experiments>6</experiments>
</comment>
<comment type="interaction">
    <interactant intactId="EBI-2693710">
        <id>Q5S006</id>
    </interactant>
    <interactant intactId="EBI-398006">
        <id>P46460</id>
        <label>Nsf</label>
    </interactant>
    <organismsDiffer>false</organismsDiffer>
    <experiments>3</experiments>
</comment>
<comment type="interaction">
    <interactant intactId="EBI-2693710">
        <id>Q5S006</id>
    </interactant>
    <interactant intactId="EBI-455340">
        <id>P31324</id>
        <label>Prkar2b</label>
    </interactant>
    <organismsDiffer>false</organismsDiffer>
    <experiments>3</experiments>
</comment>
<comment type="interaction">
    <interactant intactId="EBI-2693710">
        <id>Q5S006</id>
    </interactant>
    <interactant intactId="EBI-771608">
        <id>Q9CQV8</id>
        <label>Ywhab</label>
    </interactant>
    <organismsDiffer>false</organismsDiffer>
    <experiments>6</experiments>
</comment>
<comment type="interaction">
    <interactant intactId="EBI-2693710">
        <id>Q5S006</id>
    </interactant>
    <interactant intactId="EBI-356480">
        <id>P62259</id>
        <label>Ywhae</label>
    </interactant>
    <organismsDiffer>false</organismsDiffer>
    <experiments>4</experiments>
</comment>
<comment type="interaction">
    <interactant intactId="EBI-2693710">
        <id>Q5S006</id>
    </interactant>
    <interactant intactId="EBI-359843">
        <id>P61982</id>
        <label>Ywhag</label>
    </interactant>
    <organismsDiffer>false</organismsDiffer>
    <experiments>10</experiments>
</comment>
<comment type="interaction">
    <interactant intactId="EBI-2693710">
        <id>Q5S006</id>
    </interactant>
    <interactant intactId="EBI-444641">
        <id>P68510</id>
        <label>Ywhah</label>
    </interactant>
    <organismsDiffer>false</organismsDiffer>
    <experiments>7</experiments>
</comment>
<comment type="interaction">
    <interactant intactId="EBI-2693710">
        <id>Q5S006</id>
    </interactant>
    <interactant intactId="EBI-400675">
        <id>P68254</id>
        <label>Ywhaq</label>
    </interactant>
    <organismsDiffer>false</organismsDiffer>
    <experiments>4</experiments>
</comment>
<comment type="interaction">
    <interactant intactId="EBI-2693710">
        <id>Q5S006</id>
    </interactant>
    <interactant intactId="EBI-354751">
        <id>P63101</id>
        <label>Ywhaz</label>
    </interactant>
    <organismsDiffer>false</organismsDiffer>
    <experiments>5</experiments>
</comment>
<comment type="interaction">
    <interactant intactId="EBI-2693710">
        <id>Q5S006</id>
    </interactant>
    <interactant intactId="EBI-528768">
        <id>P26038</id>
        <label>MSN</label>
    </interactant>
    <organismsDiffer>true</organismsDiffer>
    <experiments>2</experiments>
</comment>
<comment type="subcellular location">
    <subcellularLocation>
        <location evidence="1">Cytoplasmic vesicle</location>
    </subcellularLocation>
    <subcellularLocation>
        <location evidence="1">Perikaryon</location>
    </subcellularLocation>
    <subcellularLocation>
        <location evidence="1">Cell projection</location>
        <location evidence="1">Axon</location>
    </subcellularLocation>
    <subcellularLocation>
        <location evidence="1">Cell projection</location>
        <location evidence="1">Dendrite</location>
    </subcellularLocation>
    <subcellularLocation>
        <location evidence="10 17">Golgi apparatus membrane</location>
        <topology evidence="10 17">Peripheral membrane protein</topology>
    </subcellularLocation>
    <subcellularLocation>
        <location evidence="10 13">Endoplasmic reticulum membrane</location>
        <topology evidence="10 13">Peripheral membrane protein</topology>
    </subcellularLocation>
    <subcellularLocation>
        <location evidence="10">Cytoplasmic vesicle</location>
        <location evidence="10">Secretory vesicle</location>
        <location evidence="10">Synaptic vesicle membrane</location>
    </subcellularLocation>
    <subcellularLocation>
        <location evidence="10">Endosome</location>
    </subcellularLocation>
    <subcellularLocation>
        <location evidence="10 18 20">Lysosome</location>
    </subcellularLocation>
    <subcellularLocation>
        <location evidence="10">Mitochondrion outer membrane</location>
        <topology evidence="10">Peripheral membrane protein</topology>
    </subcellularLocation>
    <subcellularLocation>
        <location evidence="1">Cytoplasm</location>
        <location evidence="1">Cytoskeleton</location>
    </subcellularLocation>
    <subcellularLocation>
        <location evidence="20">Cytoplasmic vesicle</location>
        <location evidence="20">Phagosome</location>
    </subcellularLocation>
    <text evidence="1 13 20">Colocalized with RAB29 along tubular structures emerging from Golgi apparatus (By similarity). Localizes to endoplasmic reticulum exit sites (ERES), also known as transitional endoplasmic reticulum (tER) (PubMed:25201882). Detected on phagosomes and stressed lysosomes but not detected on autophagosomes induced by starvation (PubMed:38227290). Recruitment to stressed lysosomes is dependent on the ATG8 conjugation system composed of ATG5, ATG12 and ATG16L1 and leads to lysosomal stress-induced activation of LRRK2 (PubMed:38227290).</text>
</comment>
<comment type="tissue specificity">
    <text evidence="7 8 9 10 15">Expressed in the brain (at protein level) (PubMed:28720718). Detected throughout the adult brain. Expressed in deep cerebral cortex layers, superficial cingulate cortex layers, the piriform cortex, hippocampal formation, caudate putamen, substantia nigra, the basolateral and basomedial anterior amygdala nuclei, reticular thalamic nucleus and also in the cerebellar granular cell layer. Highly expressed in the striatum, cortex and olfactory tubercle. Little or no expression in the substantia nigra, where dopaminergic neurons preferentially degenerate in Parkinson disease. Expression is particularly high in brain dopaminoceptive areas. High and strikingly specific expression in striatum and parts of cortex and no signals in dopamine neurons.</text>
</comment>
<comment type="domain">
    <text evidence="1">The seven-bladed WD repeat region is critical for synaptic vesicle trafficking and mediates interaction with multiple vesicle-associated presynaptic proteins (By similarity). It also mediates homodimerization and regulates kinase activity (By similarity).</text>
</comment>
<comment type="domain">
    <text evidence="1">The COR domain mediates homodimerization; it also mediates homotetramerization via interaction with the protein kinase domain.</text>
</comment>
<comment type="domain">
    <text evidence="1">The Roc domain mediates homodimerization and regulates kinase activity.</text>
</comment>
<comment type="PTM">
    <text evidence="1 15 17">Autophosphorylated at Ser-1292 (PubMed:28720718, PubMed:29212815). Autophosphorylation is stimulated by RAB29 (By similarity). Phosphorylation of Ser-910 and Ser-935 or Ser-1444 facilitates interaction with YWHAG (By similarity). Phosphorylation of Ser-910 and/or Ser-935 facilitates interaction with SFN (By similarity).</text>
</comment>
<comment type="PTM">
    <text evidence="1">Ubiquitinated by TRIM1; undergoes 'Lys-48'-linked polyubiquitination leading to proteasomal degradation.</text>
</comment>
<comment type="disruption phenotype">
    <text evidence="12 18">Contrary to LRRK1 knockout mice, LRRK2 knockout animals do not show obvious bone phenotypes. Osteoclast precursors differentiate into functional multinucleated cells (PubMed:23526378). Renal proximal tubule cells show significant vacuolization and an accumulation of autofluorescent lipofuscin and LAMP1-positive lysosomes (PubMed:30209220).</text>
</comment>
<comment type="similarity">
    <text evidence="21">Belongs to the protein kinase superfamily. TKL Ser/Thr protein kinase family.</text>
</comment>